<reference key="1">
    <citation type="journal article" date="1988" name="EMBO J.">
        <title>Alzheimer's disease amyloidogenic glycoprotein: expression pattern in rat brain suggests a role in cell contact.</title>
        <authorList>
            <person name="Shivers B.D."/>
            <person name="Hilbich C."/>
            <person name="Multhaup G."/>
            <person name="Salbaum J.M."/>
            <person name="Beyreuther K."/>
            <person name="Seeburg P.H."/>
        </authorList>
    </citation>
    <scope>NUCLEOTIDE SEQUENCE [MRNA] (ISOFORM APP695)</scope>
    <source>
        <tissue>Brain</tissue>
    </source>
</reference>
<reference key="2">
    <citation type="submission" date="2002-05" db="EMBL/GenBank/DDBJ databases">
        <title>A new beta amyloid precursor protein cDNA found in Rat6 embryo fibroblasts.</title>
        <authorList>
            <person name="Feng J."/>
            <person name="Song S."/>
            <person name="Zheng J."/>
        </authorList>
    </citation>
    <scope>NUCLEOTIDE SEQUENCE [MRNA] (ISOFORM APP770)</scope>
</reference>
<reference key="3">
    <citation type="journal article" date="1988" name="Science">
        <title>Amyloid beta protein precursor is possibly a heparan sulfate proteoglycan core protein.</title>
        <authorList>
            <person name="Schubert D."/>
            <person name="Schroeder R."/>
            <person name="LaCorbiere M."/>
            <person name="Saitoh T."/>
            <person name="Cole G."/>
        </authorList>
    </citation>
    <scope>PROTEIN SEQUENCE OF 18-44</scope>
</reference>
<reference key="4">
    <citation type="journal article" date="1991" name="J. Biol. Chem.">
        <title>Purification and tissue level of the beta-amyloid peptide precursor of rat brain.</title>
        <authorList>
            <person name="Potempska A."/>
            <person name="Styles J."/>
            <person name="Mehta P."/>
            <person name="Kim K.S."/>
            <person name="Miller D.L."/>
        </authorList>
    </citation>
    <scope>PROTEIN SEQUENCE OF 18-32</scope>
</reference>
<reference key="5">
    <citation type="journal article" date="1989" name="Nucleic Acids Res.">
        <title>The sequence of the two extra exons in rat preA4.</title>
        <authorList>
            <person name="Kang J."/>
            <person name="Mueller-Hill B."/>
        </authorList>
    </citation>
    <scope>NUCLEOTIDE SEQUENCE [MRNA] OF 289-364</scope>
    <source>
        <tissue>Liver</tissue>
    </source>
</reference>
<reference key="6">
    <citation type="journal article" date="2001" name="J. Biol. Chem.">
        <title>Distinct intramembrane cleavage of the beta-amyloid precursor protein family resembling gamma-secretase-like cleavage of Notch.</title>
        <authorList>
            <person name="Gu Y."/>
            <person name="Misonou H."/>
            <person name="Sato T."/>
            <person name="Dohmae N."/>
            <person name="Takio K."/>
            <person name="Ihara Y."/>
        </authorList>
    </citation>
    <scope>PROTEIN SEQUENCE OF 720-730</scope>
    <scope>MASS SPECTROMETRY</scope>
</reference>
<reference key="7">
    <citation type="journal article" date="1996" name="Ann. N. Y. Acad. Sci.">
        <title>APP gene family. Alternative splicing generates functionally related isoforms.</title>
        <authorList>
            <person name="Sandbrink R."/>
            <person name="Masters C.L."/>
            <person name="Beyreuther K."/>
        </authorList>
    </citation>
    <scope>ALTERNATIVE SPLICING</scope>
</reference>
<reference key="8">
    <citation type="journal article" date="1995" name="J. Biol. Chem.">
        <title>The Alzheimer amyloid precursor proteoglycan (appican) is present in brain and is produced by astrocytes but not by neurons in primary neural cultures.</title>
        <authorList>
            <person name="Shioi J."/>
            <person name="Pangalos M.N."/>
            <person name="Ripellino J.A."/>
            <person name="Vassilacopoulou D."/>
            <person name="Mytilineou C."/>
            <person name="Margolis R.U."/>
            <person name="Robakis N.K."/>
        </authorList>
    </citation>
    <scope>TISSUE SPECIFICITY OF APPICAN</scope>
</reference>
<reference key="9">
    <citation type="journal article" date="1997" name="Gerontology">
        <title>Expression of the APP gene family in brain cells, brain development and aging.</title>
        <authorList>
            <person name="Sandbrink R."/>
            <person name="Monning U."/>
            <person name="Masters C.L."/>
            <person name="Beyreuther K."/>
        </authorList>
    </citation>
    <scope>TISSUE SPECIFICITY OF ISOFORMS</scope>
</reference>
<reference key="10">
    <citation type="journal article" date="1999" name="J. Neurochem.">
        <title>A 127-kDa protein (UV-DDB) binds to the cytoplasmic domain of the Alzheimer's amyloid precursor protein.</title>
        <authorList>
            <person name="Watanabe T."/>
            <person name="Sukegawa J."/>
            <person name="Tomita S."/>
            <person name="Iijima K."/>
            <person name="Oguchi S."/>
            <person name="Suzuki T."/>
            <person name="Nairn A.C."/>
            <person name="Greengard P."/>
        </authorList>
    </citation>
    <scope>INTERACTION WITH DDB1</scope>
    <scope>MUTAGENESIS OF TYR-757; ASN-759 AND TYR-762</scope>
</reference>
<reference key="11">
    <citation type="journal article" date="1999" name="J. Neurosci.">
        <title>The amyloid precursor protein interacts with Go heterotrimeric protein within a cell compartment specialized in signal transduction.</title>
        <authorList>
            <person name="Brouillet E."/>
            <person name="Trembleau A."/>
            <person name="Galanaud D."/>
            <person name="Volovitch M."/>
            <person name="Bouillot C."/>
            <person name="Valenza C."/>
            <person name="Prochiantz A."/>
            <person name="Allinquant B."/>
        </authorList>
    </citation>
    <scope>INTERACTION WITH GNAO1</scope>
    <scope>MUTAGENESIS OF 732-HIS-HIS-733</scope>
</reference>
<reference key="12">
    <citation type="journal article" date="1994" name="FEBS Lett.">
        <title>The beta A4 amyloid precursor protein binding to copper.</title>
        <authorList>
            <person name="Hesse L."/>
            <person name="Beher D."/>
            <person name="Masters C.L."/>
            <person name="Multhaup G."/>
        </authorList>
    </citation>
    <scope>COPPER-BINDING</scope>
</reference>
<reference key="13">
    <citation type="journal article" date="1995" name="J. Biol. Chem.">
        <title>The chondroitin sulfate attachment site of appican is formed by splicing out exon 15 of the amyloid precursor gene.</title>
        <authorList>
            <person name="Pangalos M.N."/>
            <person name="Efthimiopoulos S."/>
            <person name="Shioi J."/>
            <person name="Robakis N.K."/>
        </authorList>
    </citation>
    <scope>CHARACTERISTICS OF APPICAN</scope>
    <scope>MUTAGENESIS OF SER-656</scope>
</reference>
<reference key="14">
    <citation type="journal article" date="1999" name="Biochemistry">
        <title>The A beta peptide of Alzheimer's disease directly produces hydrogen peroxide through metal ion reduction.</title>
        <authorList>
            <person name="Huang X."/>
            <person name="Atwood C.S."/>
            <person name="Hartshorn M.A."/>
            <person name="Multhaup G."/>
            <person name="Goldstein L.E."/>
            <person name="Scarpa R.C."/>
            <person name="Cuajungco M.P."/>
            <person name="Gray D.N."/>
            <person name="Lim J."/>
            <person name="Moir R.D."/>
            <person name="Tanzi R.E."/>
            <person name="Bush A.I."/>
        </authorList>
    </citation>
    <scope>AMYLOID-BETA METAL-BINDING</scope>
</reference>
<reference key="15">
    <citation type="journal article" date="1999" name="Biochemistry">
        <title>Histidine-13 is a crucial residue in the zinc ion-induced aggregation of the A beta peptide of Alzheimer's disease.</title>
        <authorList>
            <person name="Liu S.T."/>
            <person name="Howlett G."/>
            <person name="Barrow C.J."/>
        </authorList>
    </citation>
    <scope>AMYLOID-BETA ZINC-BINDING</scope>
</reference>
<reference key="16">
    <citation type="journal article" date="2002" name="Biochim. Biophys. Acta">
        <title>Role of glycine-33 and methionine-35 in Alzheimer's amyloid-beta peptide 1-42-associated oxidative stress and neurotoxicity.</title>
        <authorList>
            <person name="Kanski J."/>
            <person name="Varadarajan S."/>
            <person name="Aksenova M."/>
            <person name="Butterfield D.A."/>
        </authorList>
    </citation>
    <scope>IMPORTANCE OF GLY-704 IN FREE RADICAL PROPAGATION</scope>
    <scope>MUTAGENESIS OF GLY-704</scope>
</reference>
<reference key="17">
    <citation type="journal article" date="1997" name="Mol. Med.">
        <title>The cytoplasmic domain of Alzheimer's amyloid precursor protein is phosphorylated at Thr654, Ser655, and Thr668 in adult rat brain and cultured cells.</title>
        <authorList>
            <person name="Oishi M."/>
            <person name="Nairn A.C."/>
            <person name="Czernik A.J."/>
            <person name="Lim G.S."/>
            <person name="Isohara T."/>
            <person name="Gandy S.E."/>
            <person name="Greengard P."/>
            <person name="Suzuki T."/>
        </authorList>
    </citation>
    <scope>PHOSPHORYLATION AT THR-729; SER-730 AND THR-743</scope>
</reference>
<reference key="18">
    <citation type="journal article" date="1999" name="Biochem. Biophys. Res. Commun.">
        <title>Phosphorylation of the cytoplasmic domain of Alzheimer's beta-amyloid precursor protein at Ser655 by a novel protein kinase.</title>
        <authorList>
            <person name="Isohara T."/>
            <person name="Horiuchi A."/>
            <person name="Watanabe T."/>
            <person name="Ando K."/>
            <person name="Czernik A.J."/>
            <person name="Uno I."/>
            <person name="Greengard P."/>
            <person name="Nairn A.C."/>
            <person name="Suzuki T."/>
        </authorList>
    </citation>
    <scope>PHOSPHORYLATION AT SER-730</scope>
</reference>
<reference key="19">
    <citation type="journal article" date="1999" name="J. Neurosci.">
        <title>Role of phosphorylation of Alzheimer's amyloid precursor protein during neuronal differentiation.</title>
        <authorList>
            <person name="Ando K."/>
            <person name="Oishi M."/>
            <person name="Takeda S."/>
            <person name="Iijima K."/>
            <person name="Isohara T."/>
            <person name="Nairn A.C."/>
            <person name="Kirino Y."/>
            <person name="Greengard P."/>
            <person name="Suzuki T."/>
        </authorList>
    </citation>
    <scope>PHOSPHORYLATION</scope>
    <scope>INDUCTION</scope>
    <scope>SUBCELLULAR LOCATION</scope>
    <scope>MUTAGENESIS OF THR-743</scope>
</reference>
<reference key="20">
    <citation type="journal article" date="2000" name="J. Neurochem.">
        <title>Neuron-specific phosphorylation of Alzheimer's beta-amyloid precursor protein by cyclin-dependent kinase 5.</title>
        <authorList>
            <person name="Iijima K."/>
            <person name="Ando K."/>
            <person name="Takeda S."/>
            <person name="Satoh Y."/>
            <person name="Seki T."/>
            <person name="Itohara S."/>
            <person name="Greengard P."/>
            <person name="Kirino Y."/>
            <person name="Nairn A.C."/>
            <person name="Suzuki T."/>
        </authorList>
    </citation>
    <scope>PHOSPHORYLATION AT THR-743</scope>
</reference>
<reference key="21">
    <citation type="journal article" date="2012" name="Nat. Commun.">
        <title>Quantitative maps of protein phosphorylation sites across 14 different rat organs and tissues.</title>
        <authorList>
            <person name="Lundby A."/>
            <person name="Secher A."/>
            <person name="Lage K."/>
            <person name="Nordsborg N.B."/>
            <person name="Dmytriyev A."/>
            <person name="Lundby C."/>
            <person name="Olsen J.V."/>
        </authorList>
    </citation>
    <scope>PHOSPHORYLATION [LARGE SCALE ANALYSIS] AT SER-441</scope>
    <scope>IDENTIFICATION BY MASS SPECTROMETRY [LARGE SCALE ANALYSIS]</scope>
</reference>
<reference key="22">
    <citation type="journal article" date="2012" name="Phys. Biol.">
        <title>Quantitative measurements and modeling of cargo-motor interactions during fast transport in the living axon.</title>
        <authorList>
            <person name="Seamster P.E."/>
            <person name="Loewenberg M."/>
            <person name="Pascal J."/>
            <person name="Chauviere A."/>
            <person name="Gonzales A."/>
            <person name="Cristini V."/>
            <person name="Bearer E.L."/>
        </authorList>
    </citation>
    <scope>INTERACTION WITH KIF5B</scope>
    <scope>TISSUE SPECIFICITY</scope>
</reference>
<reference key="23">
    <citation type="journal article" date="2012" name="Proc. Natl. Acad. Sci. U.S.A.">
        <title>Ubiquilin-1 regulates amyloid precursor protein maturation and degradation by stimulating K63-linked polyubiquitination of lysine 688.</title>
        <authorList>
            <person name="El Ayadi A."/>
            <person name="Stieren E.S."/>
            <person name="Barral J.M."/>
            <person name="Boehning D."/>
        </authorList>
    </citation>
    <scope>UBIQUITINATION AT LYS-763</scope>
    <scope>MUTAGENESIS OF LYS-763</scope>
</reference>
<reference key="24">
    <citation type="journal article" date="2015" name="J. Proteome Res.">
        <title>Peptidomics for studying limited proteolysis.</title>
        <authorList>
            <person name="Tsuchiya T."/>
            <person name="Osaki T."/>
            <person name="Minamino N."/>
            <person name="Sasaki K."/>
        </authorList>
    </citation>
    <scope>PROTEOLYTIC PROCESSING</scope>
    <scope>IDENTIFICATION BY MASS SPECTROMETRY</scope>
</reference>
<reference key="25">
    <citation type="journal article" date="2001" name="J. Biol. Chem.">
        <title>Appican, the proteoglycan form of the amyloid precursor protein, contains chondroitin sulfate E in the repeating disaccharide region and 4-O-sulfated galactose in the linkage region.</title>
        <authorList>
            <person name="Tsuchida K."/>
            <person name="Shioi J."/>
            <person name="Yamada S."/>
            <person name="Boghosian G."/>
            <person name="Wu A."/>
            <person name="Cai H."/>
            <person name="Sugahara K."/>
            <person name="Robakis N.K."/>
        </authorList>
    </citation>
    <scope>STRUCTURE OF CARBOHYDRATE IN APPICAN</scope>
    <scope>GLYCOSYLATION</scope>
</reference>
<accession>P08592</accession>
<accession>Q547B7</accession>
<evidence type="ECO:0000250" key="1"/>
<evidence type="ECO:0000250" key="2">
    <source>
        <dbReference type="UniProtKB" id="P05067"/>
    </source>
</evidence>
<evidence type="ECO:0000250" key="3">
    <source>
        <dbReference type="UniProtKB" id="P12023"/>
    </source>
</evidence>
<evidence type="ECO:0000255" key="4"/>
<evidence type="ECO:0000255" key="5">
    <source>
        <dbReference type="PROSITE-ProRule" id="PRU00031"/>
    </source>
</evidence>
<evidence type="ECO:0000255" key="6">
    <source>
        <dbReference type="PROSITE-ProRule" id="PRU01217"/>
    </source>
</evidence>
<evidence type="ECO:0000255" key="7">
    <source>
        <dbReference type="PROSITE-ProRule" id="PRU01218"/>
    </source>
</evidence>
<evidence type="ECO:0000256" key="8">
    <source>
        <dbReference type="SAM" id="MobiDB-lite"/>
    </source>
</evidence>
<evidence type="ECO:0000269" key="9">
    <source>
    </source>
</evidence>
<evidence type="ECO:0000269" key="10">
    <source>
    </source>
</evidence>
<evidence type="ECO:0000269" key="11">
    <source>
    </source>
</evidence>
<evidence type="ECO:0000269" key="12">
    <source>
    </source>
</evidence>
<evidence type="ECO:0000269" key="13">
    <source>
    </source>
</evidence>
<evidence type="ECO:0000269" key="14">
    <source>
    </source>
</evidence>
<evidence type="ECO:0000269" key="15">
    <source>
    </source>
</evidence>
<evidence type="ECO:0000269" key="16">
    <source>
    </source>
</evidence>
<evidence type="ECO:0000269" key="17">
    <source>
    </source>
</evidence>
<evidence type="ECO:0000269" key="18">
    <source>
    </source>
</evidence>
<evidence type="ECO:0000269" key="19">
    <source>
    </source>
</evidence>
<evidence type="ECO:0000269" key="20">
    <source>
    </source>
</evidence>
<evidence type="ECO:0000269" key="21">
    <source>
    </source>
</evidence>
<evidence type="ECO:0000269" key="22">
    <source>
    </source>
</evidence>
<evidence type="ECO:0000269" key="23">
    <source>
    </source>
</evidence>
<evidence type="ECO:0000303" key="24">
    <source>
    </source>
</evidence>
<evidence type="ECO:0000305" key="25"/>
<evidence type="ECO:0000312" key="26">
    <source>
        <dbReference type="RGD" id="2139"/>
    </source>
</evidence>
<evidence type="ECO:0007744" key="27">
    <source>
    </source>
</evidence>
<evidence type="ECO:0007829" key="28">
    <source>
        <dbReference type="PDB" id="1NMJ"/>
    </source>
</evidence>
<evidence type="ECO:0007829" key="29">
    <source>
        <dbReference type="PDB" id="2LI9"/>
    </source>
</evidence>
<proteinExistence type="evidence at protein level"/>
<organism>
    <name type="scientific">Rattus norvegicus</name>
    <name type="common">Rat</name>
    <dbReference type="NCBI Taxonomy" id="10116"/>
    <lineage>
        <taxon>Eukaryota</taxon>
        <taxon>Metazoa</taxon>
        <taxon>Chordata</taxon>
        <taxon>Craniata</taxon>
        <taxon>Vertebrata</taxon>
        <taxon>Euteleostomi</taxon>
        <taxon>Mammalia</taxon>
        <taxon>Eutheria</taxon>
        <taxon>Euarchontoglires</taxon>
        <taxon>Glires</taxon>
        <taxon>Rodentia</taxon>
        <taxon>Myomorpha</taxon>
        <taxon>Muroidea</taxon>
        <taxon>Muridae</taxon>
        <taxon>Murinae</taxon>
        <taxon>Rattus</taxon>
    </lineage>
</organism>
<keyword id="KW-0002">3D-structure</keyword>
<keyword id="KW-0025">Alternative splicing</keyword>
<keyword id="KW-0034">Amyloid</keyword>
<keyword id="KW-0053">Apoptosis</keyword>
<keyword id="KW-0130">Cell adhesion</keyword>
<keyword id="KW-1003">Cell membrane</keyword>
<keyword id="KW-0966">Cell projection</keyword>
<keyword id="KW-0168">Coated pit</keyword>
<keyword id="KW-0186">Copper</keyword>
<keyword id="KW-0963">Cytoplasm</keyword>
<keyword id="KW-0968">Cytoplasmic vesicle</keyword>
<keyword id="KW-0903">Direct protein sequencing</keyword>
<keyword id="KW-1015">Disulfide bond</keyword>
<keyword id="KW-0254">Endocytosis</keyword>
<keyword id="KW-0256">Endoplasmic reticulum</keyword>
<keyword id="KW-0967">Endosome</keyword>
<keyword id="KW-0325">Glycoprotein</keyword>
<keyword id="KW-0333">Golgi apparatus</keyword>
<keyword id="KW-0358">Heparin-binding</keyword>
<keyword id="KW-0408">Iron</keyword>
<keyword id="KW-1017">Isopeptide bond</keyword>
<keyword id="KW-0472">Membrane</keyword>
<keyword id="KW-0479">Metal-binding</keyword>
<keyword id="KW-0914">Notch signaling pathway</keyword>
<keyword id="KW-0539">Nucleus</keyword>
<keyword id="KW-0597">Phosphoprotein</keyword>
<keyword id="KW-0646">Protease inhibitor</keyword>
<keyword id="KW-0654">Proteoglycan</keyword>
<keyword id="KW-1185">Reference proteome</keyword>
<keyword id="KW-0964">Secreted</keyword>
<keyword id="KW-0722">Serine protease inhibitor</keyword>
<keyword id="KW-0732">Signal</keyword>
<keyword id="KW-0765">Sulfation</keyword>
<keyword id="KW-0812">Transmembrane</keyword>
<keyword id="KW-1133">Transmembrane helix</keyword>
<keyword id="KW-0832">Ubl conjugation</keyword>
<keyword id="KW-0862">Zinc</keyword>
<sequence length="770" mass="86704">MLPSLALLLLAAWTVRALEVPTDGNAGLLAEPQIAMFCGKLNMHMNVQNGKWESDPSGTKTCIGTKEGILQYCQEVYPELQITNVVEANQPVTIQNWCKRGRKQCKTHTHIVIPYRCLVGEFVSDALLVPDKCKFLHQERMDVCETHLHWHTVAKETCSEKSTNLHDYGMLLPCGIDKFRGVEFVCCPLAEESDSIDSADAEEDDSDVWWGGADTDYADGGEDKVVEVAEEEEVADVEEEEAEDDEDVEDGDEVEEEAEEPYEEATERTTSIATTTTTTTESVEEVVREVCSEQAETGPCRAMISRWYFDVTEGKCAPFFYGGCGGNRNNFDTEEYCMAVCGSVSSQSLLKTTSEPLPQDPVKLPTTAASTPDAVDKYLETPGDENEHAHFQKAKERLEAKHRERMSQVMREWEEAERQAKNLPKADKKAVIQHFQEKVESLEQEAANERQQLVETHMARVEAMLNDRRRLALENYITALQAVPPRPHHVFNMLKKYVRAEQKDRQHTLKHFEHVRMVDPKKAAQIRSQVMTHLRVIYERMNQSLSLLYNVPAVAEEIQDEVDELLQKEQNYSDDVLANMISEPRISYGNDALMPSLTETKTTVELLPVNGEFSLDDLQPWHPFGVDSVPANTENEVEPVDARPAADRGLTTRPGSGLTNIKTEEISEVKMDAEFGHDSGFEVRHQKLVFFAEDVGSNKGAIIGLMVGGVVIATVIVITLVMLKKKQYTSIHHGVVEVDAAVTPEERHLSKMQQNGYENPTYKFFEQMQN</sequence>
<protein>
    <recommendedName>
        <fullName evidence="26">Amyloid-beta precursor protein</fullName>
    </recommendedName>
    <alternativeName>
        <fullName>ABPP</fullName>
        <shortName>APP</shortName>
    </alternativeName>
    <alternativeName>
        <fullName>Alzheimer disease amyloid A4 protein homolog</fullName>
    </alternativeName>
    <alternativeName>
        <fullName>Alzheimer disease amyloid protein</fullName>
    </alternativeName>
    <alternativeName>
        <fullName evidence="25">Amyloid precursor protein</fullName>
    </alternativeName>
    <alternativeName>
        <fullName evidence="26">Amyloid-beta (A4) precursor protein</fullName>
    </alternativeName>
    <alternativeName>
        <fullName evidence="26">Amyloid-beta A4 protein</fullName>
    </alternativeName>
    <alternativeName>
        <fullName>Amyloidogenic glycoprotein</fullName>
        <shortName>AG</shortName>
    </alternativeName>
    <component>
        <recommendedName>
            <fullName>N-APP</fullName>
        </recommendedName>
    </component>
    <component>
        <recommendedName>
            <fullName>Soluble APP-alpha</fullName>
            <shortName>S-APP-alpha</shortName>
        </recommendedName>
    </component>
    <component>
        <recommendedName>
            <fullName>Soluble APP-beta</fullName>
            <shortName>S-APP-beta</shortName>
        </recommendedName>
    </component>
    <component>
        <recommendedName>
            <fullName>C99</fullName>
        </recommendedName>
        <alternativeName>
            <fullName>Beta-secretase C-terminal fragment</fullName>
            <shortName>Beta-CTF</shortName>
        </alternativeName>
    </component>
    <component>
        <recommendedName>
            <fullName>Amyloid-beta protein 42</fullName>
            <shortName>Abeta42</shortName>
        </recommendedName>
        <alternativeName>
            <fullName>Beta-APP42</fullName>
        </alternativeName>
    </component>
    <component>
        <recommendedName>
            <fullName>Amyloid-beta protein 40</fullName>
            <shortName>Abeta40</shortName>
        </recommendedName>
        <alternativeName>
            <fullName>Beta-APP40</fullName>
        </alternativeName>
    </component>
    <component>
        <recommendedName>
            <fullName>C83</fullName>
        </recommendedName>
        <alternativeName>
            <fullName>Alpha-secretase C-terminal fragment</fullName>
            <shortName>Alpha-CTF</shortName>
        </alternativeName>
    </component>
    <component>
        <recommendedName>
            <fullName>P3(42)</fullName>
        </recommendedName>
    </component>
    <component>
        <recommendedName>
            <fullName>P3(40)</fullName>
        </recommendedName>
    </component>
    <component>
        <recommendedName>
            <fullName>C80</fullName>
        </recommendedName>
    </component>
    <component>
        <recommendedName>
            <fullName>Gamma-secretase C-terminal fragment 59</fullName>
        </recommendedName>
        <alternativeName>
            <fullName>Gamma-CTF(59)</fullName>
        </alternativeName>
    </component>
    <component>
        <recommendedName>
            <fullName>Gamma-secretase C-terminal fragment 57</fullName>
        </recommendedName>
        <alternativeName>
            <fullName>Gamma-CTF(57)</fullName>
        </alternativeName>
    </component>
    <component>
        <recommendedName>
            <fullName>Gamma-secretase C-terminal fragment 50</fullName>
        </recommendedName>
        <alternativeName>
            <fullName>Gamma-CTF(50)</fullName>
        </alternativeName>
    </component>
    <component>
        <recommendedName>
            <fullName>C31</fullName>
        </recommendedName>
    </component>
</protein>
<gene>
    <name evidence="26" type="primary">App</name>
    <name evidence="2" type="synonym">A4</name>
    <name evidence="2" type="synonym">AD1</name>
</gene>
<dbReference type="EMBL" id="X07648">
    <property type="protein sequence ID" value="CAA30488.1"/>
    <property type="molecule type" value="mRNA"/>
</dbReference>
<dbReference type="EMBL" id="AF513015">
    <property type="protein sequence ID" value="AAM90259.1"/>
    <property type="molecule type" value="mRNA"/>
</dbReference>
<dbReference type="EMBL" id="X14066">
    <property type="protein sequence ID" value="CAA32229.1"/>
    <property type="molecule type" value="mRNA"/>
</dbReference>
<dbReference type="PIR" id="S00550">
    <property type="entry name" value="S00550"/>
</dbReference>
<dbReference type="PIR" id="S03607">
    <property type="entry name" value="S03607"/>
</dbReference>
<dbReference type="PIR" id="S23094">
    <property type="entry name" value="S23094"/>
</dbReference>
<dbReference type="RefSeq" id="NP_062161.1">
    <molecule id="P08592-1"/>
    <property type="nucleotide sequence ID" value="NM_019288.2"/>
</dbReference>
<dbReference type="RefSeq" id="XP_006248073.1">
    <molecule id="P08592-2"/>
    <property type="nucleotide sequence ID" value="XM_006248011.5"/>
</dbReference>
<dbReference type="PDB" id="1M7E">
    <property type="method" value="X-ray"/>
    <property type="resolution" value="2.45 A"/>
    <property type="chains" value="D/E/F=755-763"/>
</dbReference>
<dbReference type="PDB" id="1NMJ">
    <property type="method" value="NMR"/>
    <property type="chains" value="A=672-699"/>
</dbReference>
<dbReference type="PDB" id="1OQN">
    <property type="method" value="X-ray"/>
    <property type="resolution" value="2.30 A"/>
    <property type="chains" value="C/D=755-763"/>
</dbReference>
<dbReference type="PDB" id="2LI9">
    <property type="method" value="NMR"/>
    <property type="chains" value="A/B=672-687"/>
</dbReference>
<dbReference type="PDBsum" id="1M7E"/>
<dbReference type="PDBsum" id="1NMJ"/>
<dbReference type="PDBsum" id="1OQN"/>
<dbReference type="PDBsum" id="2LI9"/>
<dbReference type="BMRB" id="P08592"/>
<dbReference type="SMR" id="P08592"/>
<dbReference type="BioGRID" id="248450">
    <property type="interactions" value="6"/>
</dbReference>
<dbReference type="ComplexPortal" id="CPX-1108">
    <property type="entry name" value="Amyloid-beta protein 40/42 complex"/>
</dbReference>
<dbReference type="ComplexPortal" id="CPX-1109">
    <property type="entry name" value="Amyloid-beta protein 40 complex"/>
</dbReference>
<dbReference type="ComplexPortal" id="CPX-1110">
    <property type="entry name" value="Amyloid-beta protein 42 complex"/>
</dbReference>
<dbReference type="ComplexPortal" id="CPX-1182">
    <property type="entry name" value="Amyloid-beta protein 40 oligomeric complex"/>
</dbReference>
<dbReference type="ComplexPortal" id="CPX-1183">
    <property type="entry name" value="Amyloid-beta protein 42 oligomeric complex"/>
</dbReference>
<dbReference type="ComplexPortal" id="CPX-1184">
    <property type="entry name" value="Amyloid-beta protein 40/42 oligomeric complex"/>
</dbReference>
<dbReference type="DIP" id="DIP-618N"/>
<dbReference type="ELM" id="P08592"/>
<dbReference type="FunCoup" id="P08592">
    <property type="interactions" value="2639"/>
</dbReference>
<dbReference type="IntAct" id="P08592">
    <property type="interactions" value="13"/>
</dbReference>
<dbReference type="STRING" id="10116.ENSRNOP00000041613"/>
<dbReference type="BindingDB" id="P08592"/>
<dbReference type="ChEMBL" id="CHEMBL3638365"/>
<dbReference type="MEROPS" id="I02.015"/>
<dbReference type="TCDB" id="1.C.50.1.1">
    <property type="family name" value="the amyloid Beta-protein peptide (aBetapp) family"/>
</dbReference>
<dbReference type="GlyCosmos" id="P08592">
    <property type="glycosylation" value="3 sites, No reported glycans"/>
</dbReference>
<dbReference type="GlyGen" id="P08592">
    <property type="glycosylation" value="3 sites"/>
</dbReference>
<dbReference type="iPTMnet" id="P08592"/>
<dbReference type="PhosphoSitePlus" id="P08592"/>
<dbReference type="jPOST" id="P08592"/>
<dbReference type="PaxDb" id="10116-ENSRNOP00000041613"/>
<dbReference type="GeneID" id="54226"/>
<dbReference type="KEGG" id="rno:54226"/>
<dbReference type="UCSC" id="RGD:2139">
    <molecule id="P08592-1"/>
    <property type="organism name" value="rat"/>
</dbReference>
<dbReference type="AGR" id="RGD:2139"/>
<dbReference type="CTD" id="351"/>
<dbReference type="RGD" id="2139">
    <property type="gene designation" value="App"/>
</dbReference>
<dbReference type="VEuPathDB" id="HostDB:ENSRNOG00000006997"/>
<dbReference type="eggNOG" id="KOG3540">
    <property type="taxonomic scope" value="Eukaryota"/>
</dbReference>
<dbReference type="HOGENOM" id="CLU_014607_2_1_1"/>
<dbReference type="InParanoid" id="P08592"/>
<dbReference type="OrthoDB" id="6147836at2759"/>
<dbReference type="PhylomeDB" id="P08592"/>
<dbReference type="TreeFam" id="TF317274"/>
<dbReference type="Reactome" id="R-RNO-114608">
    <property type="pathway name" value="Platelet degranulation"/>
</dbReference>
<dbReference type="Reactome" id="R-RNO-3000178">
    <property type="pathway name" value="ECM proteoglycans"/>
</dbReference>
<dbReference type="Reactome" id="R-RNO-381426">
    <property type="pathway name" value="Regulation of Insulin-like Growth Factor (IGF) transport and uptake by Insulin-like Growth Factor Binding Proteins (IGFBPs)"/>
</dbReference>
<dbReference type="Reactome" id="R-RNO-416476">
    <property type="pathway name" value="G alpha (q) signalling events"/>
</dbReference>
<dbReference type="Reactome" id="R-RNO-418594">
    <property type="pathway name" value="G alpha (i) signalling events"/>
</dbReference>
<dbReference type="Reactome" id="R-RNO-432720">
    <property type="pathway name" value="Lysosome Vesicle Biogenesis"/>
</dbReference>
<dbReference type="Reactome" id="R-RNO-444473">
    <property type="pathway name" value="Formyl peptide receptors bind formyl peptides and many other ligands"/>
</dbReference>
<dbReference type="Reactome" id="R-RNO-445989">
    <property type="pathway name" value="TAK1-dependent IKK and NF-kappa-B activation"/>
</dbReference>
<dbReference type="Reactome" id="R-RNO-879415">
    <property type="pathway name" value="Advanced glycosylation endproduct receptor signaling"/>
</dbReference>
<dbReference type="Reactome" id="R-RNO-8957275">
    <property type="pathway name" value="Post-translational protein phosphorylation"/>
</dbReference>
<dbReference type="Reactome" id="R-RNO-933542">
    <property type="pathway name" value="TRAF6 mediated NF-kB activation"/>
</dbReference>
<dbReference type="Reactome" id="R-RNO-9609523">
    <property type="pathway name" value="Insertion of tail-anchored proteins into the endoplasmic reticulum membrane"/>
</dbReference>
<dbReference type="Reactome" id="R-RNO-9837999">
    <property type="pathway name" value="Mitochondrial protein degradation"/>
</dbReference>
<dbReference type="EvolutionaryTrace" id="P08592"/>
<dbReference type="PRO" id="PR:P08592"/>
<dbReference type="Proteomes" id="UP000002494">
    <property type="component" value="Chromosome 11"/>
</dbReference>
<dbReference type="Bgee" id="ENSRNOG00000006997">
    <property type="expression patterns" value="Expressed in frontal cortex and 19 other cell types or tissues"/>
</dbReference>
<dbReference type="ExpressionAtlas" id="P08592">
    <property type="expression patterns" value="baseline and differential"/>
</dbReference>
<dbReference type="GO" id="GO:0106003">
    <property type="term" value="C:amyloid-beta complex"/>
    <property type="evidence" value="ECO:0000266"/>
    <property type="project" value="RGD"/>
</dbReference>
<dbReference type="GO" id="GO:0045177">
    <property type="term" value="C:apical part of cell"/>
    <property type="evidence" value="ECO:0000266"/>
    <property type="project" value="RGD"/>
</dbReference>
<dbReference type="GO" id="GO:0097449">
    <property type="term" value="C:astrocyte projection"/>
    <property type="evidence" value="ECO:0000314"/>
    <property type="project" value="RGD"/>
</dbReference>
<dbReference type="GO" id="GO:0030424">
    <property type="term" value="C:axon"/>
    <property type="evidence" value="ECO:0000314"/>
    <property type="project" value="AgBase"/>
</dbReference>
<dbReference type="GO" id="GO:0009986">
    <property type="term" value="C:cell surface"/>
    <property type="evidence" value="ECO:0000314"/>
    <property type="project" value="AgBase"/>
</dbReference>
<dbReference type="GO" id="GO:0005911">
    <property type="term" value="C:cell-cell junction"/>
    <property type="evidence" value="ECO:0000266"/>
    <property type="project" value="RGD"/>
</dbReference>
<dbReference type="GO" id="GO:0035253">
    <property type="term" value="C:ciliary rootlet"/>
    <property type="evidence" value="ECO:0000266"/>
    <property type="project" value="RGD"/>
</dbReference>
<dbReference type="GO" id="GO:0005905">
    <property type="term" value="C:clathrin-coated pit"/>
    <property type="evidence" value="ECO:0007669"/>
    <property type="project" value="UniProtKB-SubCell"/>
</dbReference>
<dbReference type="GO" id="GO:0030134">
    <property type="term" value="C:COPII-coated ER to Golgi transport vesicle"/>
    <property type="evidence" value="ECO:0000266"/>
    <property type="project" value="RGD"/>
</dbReference>
<dbReference type="GO" id="GO:0005737">
    <property type="term" value="C:cytoplasm"/>
    <property type="evidence" value="ECO:0000250"/>
    <property type="project" value="UniProtKB"/>
</dbReference>
<dbReference type="GO" id="GO:0031410">
    <property type="term" value="C:cytoplasmic vesicle"/>
    <property type="evidence" value="ECO:0000266"/>
    <property type="project" value="RGD"/>
</dbReference>
<dbReference type="GO" id="GO:0030425">
    <property type="term" value="C:dendrite"/>
    <property type="evidence" value="ECO:0000266"/>
    <property type="project" value="RGD"/>
</dbReference>
<dbReference type="GO" id="GO:0043198">
    <property type="term" value="C:dendritic shaft"/>
    <property type="evidence" value="ECO:0000266"/>
    <property type="project" value="RGD"/>
</dbReference>
<dbReference type="GO" id="GO:0043197">
    <property type="term" value="C:dendritic spine"/>
    <property type="evidence" value="ECO:0000266"/>
    <property type="project" value="RGD"/>
</dbReference>
<dbReference type="GO" id="GO:0005769">
    <property type="term" value="C:early endosome"/>
    <property type="evidence" value="ECO:0000250"/>
    <property type="project" value="UniProtKB"/>
</dbReference>
<dbReference type="GO" id="GO:0031901">
    <property type="term" value="C:early endosome membrane"/>
    <property type="evidence" value="ECO:0000266"/>
    <property type="project" value="RGD"/>
</dbReference>
<dbReference type="GO" id="GO:0005783">
    <property type="term" value="C:endoplasmic reticulum"/>
    <property type="evidence" value="ECO:0000266"/>
    <property type="project" value="RGD"/>
</dbReference>
<dbReference type="GO" id="GO:0005768">
    <property type="term" value="C:endosome"/>
    <property type="evidence" value="ECO:0000266"/>
    <property type="project" value="RGD"/>
</dbReference>
<dbReference type="GO" id="GO:0070381">
    <property type="term" value="C:endosome to plasma membrane transport vesicle"/>
    <property type="evidence" value="ECO:0000266"/>
    <property type="project" value="RGD"/>
</dbReference>
<dbReference type="GO" id="GO:0005615">
    <property type="term" value="C:extracellular space"/>
    <property type="evidence" value="ECO:0000314"/>
    <property type="project" value="RGD"/>
</dbReference>
<dbReference type="GO" id="GO:0005794">
    <property type="term" value="C:Golgi apparatus"/>
    <property type="evidence" value="ECO:0000250"/>
    <property type="project" value="UniProtKB"/>
</dbReference>
<dbReference type="GO" id="GO:0005798">
    <property type="term" value="C:Golgi-associated vesicle"/>
    <property type="evidence" value="ECO:0000250"/>
    <property type="project" value="UniProtKB"/>
</dbReference>
<dbReference type="GO" id="GO:0030426">
    <property type="term" value="C:growth cone"/>
    <property type="evidence" value="ECO:0000314"/>
    <property type="project" value="RGD"/>
</dbReference>
<dbReference type="GO" id="GO:1990812">
    <property type="term" value="C:growth cone filopodium"/>
    <property type="evidence" value="ECO:0000314"/>
    <property type="project" value="RGD"/>
</dbReference>
<dbReference type="GO" id="GO:1990761">
    <property type="term" value="C:growth cone lamellipodium"/>
    <property type="evidence" value="ECO:0000314"/>
    <property type="project" value="RGD"/>
</dbReference>
<dbReference type="GO" id="GO:0097708">
    <property type="term" value="C:intracellular vesicle"/>
    <property type="evidence" value="ECO:0000266"/>
    <property type="project" value="RGD"/>
</dbReference>
<dbReference type="GO" id="GO:1990777">
    <property type="term" value="C:lipoprotein particle"/>
    <property type="evidence" value="ECO:0000266"/>
    <property type="project" value="RGD"/>
</dbReference>
<dbReference type="GO" id="GO:0005764">
    <property type="term" value="C:lysosome"/>
    <property type="evidence" value="ECO:0000266"/>
    <property type="project" value="RGD"/>
</dbReference>
<dbReference type="GO" id="GO:0044304">
    <property type="term" value="C:main axon"/>
    <property type="evidence" value="ECO:0000314"/>
    <property type="project" value="RGD"/>
</dbReference>
<dbReference type="GO" id="GO:0016020">
    <property type="term" value="C:membrane"/>
    <property type="evidence" value="ECO:0000250"/>
    <property type="project" value="UniProtKB"/>
</dbReference>
<dbReference type="GO" id="GO:0045121">
    <property type="term" value="C:membrane raft"/>
    <property type="evidence" value="ECO:0000266"/>
    <property type="project" value="RGD"/>
</dbReference>
<dbReference type="GO" id="GO:0031594">
    <property type="term" value="C:neuromuscular junction"/>
    <property type="evidence" value="ECO:0000266"/>
    <property type="project" value="RGD"/>
</dbReference>
<dbReference type="GO" id="GO:0043005">
    <property type="term" value="C:neuron projection"/>
    <property type="evidence" value="ECO:0000266"/>
    <property type="project" value="RGD"/>
</dbReference>
<dbReference type="GO" id="GO:0098992">
    <property type="term" value="C:neuronal dense core vesicle"/>
    <property type="evidence" value="ECO:0000314"/>
    <property type="project" value="SynGO"/>
</dbReference>
<dbReference type="GO" id="GO:0005641">
    <property type="term" value="C:nuclear envelope lumen"/>
    <property type="evidence" value="ECO:0000266"/>
    <property type="project" value="RGD"/>
</dbReference>
<dbReference type="GO" id="GO:0043204">
    <property type="term" value="C:perikaryon"/>
    <property type="evidence" value="ECO:0007669"/>
    <property type="project" value="UniProtKB-SubCell"/>
</dbReference>
<dbReference type="GO" id="GO:0048471">
    <property type="term" value="C:perinuclear region of cytoplasm"/>
    <property type="evidence" value="ECO:0000266"/>
    <property type="project" value="RGD"/>
</dbReference>
<dbReference type="GO" id="GO:0005886">
    <property type="term" value="C:plasma membrane"/>
    <property type="evidence" value="ECO:0000266"/>
    <property type="project" value="RGD"/>
</dbReference>
<dbReference type="GO" id="GO:0048786">
    <property type="term" value="C:presynaptic active zone"/>
    <property type="evidence" value="ECO:0000266"/>
    <property type="project" value="RGD"/>
</dbReference>
<dbReference type="GO" id="GO:0043235">
    <property type="term" value="C:receptor complex"/>
    <property type="evidence" value="ECO:0000266"/>
    <property type="project" value="RGD"/>
</dbReference>
<dbReference type="GO" id="GO:0055037">
    <property type="term" value="C:recycling endosome"/>
    <property type="evidence" value="ECO:0000250"/>
    <property type="project" value="UniProtKB"/>
</dbReference>
<dbReference type="GO" id="GO:0005790">
    <property type="term" value="C:smooth endoplasmic reticulum"/>
    <property type="evidence" value="ECO:0007669"/>
    <property type="project" value="GOC"/>
</dbReference>
<dbReference type="GO" id="GO:0051233">
    <property type="term" value="C:spindle midzone"/>
    <property type="evidence" value="ECO:0000266"/>
    <property type="project" value="RGD"/>
</dbReference>
<dbReference type="GO" id="GO:0045202">
    <property type="term" value="C:synapse"/>
    <property type="evidence" value="ECO:0000266"/>
    <property type="project" value="RGD"/>
</dbReference>
<dbReference type="GO" id="GO:0008021">
    <property type="term" value="C:synaptic vesicle"/>
    <property type="evidence" value="ECO:0000266"/>
    <property type="project" value="RGD"/>
</dbReference>
<dbReference type="GO" id="GO:0043195">
    <property type="term" value="C:terminal bouton"/>
    <property type="evidence" value="ECO:0007005"/>
    <property type="project" value="ParkinsonsUK-UCL"/>
</dbReference>
<dbReference type="GO" id="GO:0034185">
    <property type="term" value="F:apolipoprotein binding"/>
    <property type="evidence" value="ECO:0000266"/>
    <property type="project" value="RGD"/>
</dbReference>
<dbReference type="GO" id="GO:0003677">
    <property type="term" value="F:DNA binding"/>
    <property type="evidence" value="ECO:0000250"/>
    <property type="project" value="UniProtKB"/>
</dbReference>
<dbReference type="GO" id="GO:0019899">
    <property type="term" value="F:enzyme binding"/>
    <property type="evidence" value="ECO:0000266"/>
    <property type="project" value="RGD"/>
</dbReference>
<dbReference type="GO" id="GO:0005109">
    <property type="term" value="F:frizzled binding"/>
    <property type="evidence" value="ECO:0000266"/>
    <property type="project" value="RGD"/>
</dbReference>
<dbReference type="GO" id="GO:0070851">
    <property type="term" value="F:growth factor receptor binding"/>
    <property type="evidence" value="ECO:0000353"/>
    <property type="project" value="RGD"/>
</dbReference>
<dbReference type="GO" id="GO:0043395">
    <property type="term" value="F:heparan sulfate proteoglycan binding"/>
    <property type="evidence" value="ECO:0000266"/>
    <property type="project" value="RGD"/>
</dbReference>
<dbReference type="GO" id="GO:0008201">
    <property type="term" value="F:heparin binding"/>
    <property type="evidence" value="ECO:0007669"/>
    <property type="project" value="UniProtKB-KW"/>
</dbReference>
<dbReference type="GO" id="GO:0042802">
    <property type="term" value="F:identical protein binding"/>
    <property type="evidence" value="ECO:0000266"/>
    <property type="project" value="RGD"/>
</dbReference>
<dbReference type="GO" id="GO:0016504">
    <property type="term" value="F:peptidase activator activity"/>
    <property type="evidence" value="ECO:0000314"/>
    <property type="project" value="RGD"/>
</dbReference>
<dbReference type="GO" id="GO:0019904">
    <property type="term" value="F:protein domain specific binding"/>
    <property type="evidence" value="ECO:0000266"/>
    <property type="project" value="RGD"/>
</dbReference>
<dbReference type="GO" id="GO:0019901">
    <property type="term" value="F:protein kinase binding"/>
    <property type="evidence" value="ECO:0000266"/>
    <property type="project" value="RGD"/>
</dbReference>
<dbReference type="GO" id="GO:0120283">
    <property type="term" value="F:protein serine/threonine kinase binding"/>
    <property type="evidence" value="ECO:0000266"/>
    <property type="project" value="RGD"/>
</dbReference>
<dbReference type="GO" id="GO:0051425">
    <property type="term" value="F:PTB domain binding"/>
    <property type="evidence" value="ECO:0000266"/>
    <property type="project" value="RGD"/>
</dbReference>
<dbReference type="GO" id="GO:0048018">
    <property type="term" value="F:receptor ligand activity"/>
    <property type="evidence" value="ECO:0000266"/>
    <property type="project" value="RGD"/>
</dbReference>
<dbReference type="GO" id="GO:0000978">
    <property type="term" value="F:RNA polymerase II cis-regulatory region sequence-specific DNA binding"/>
    <property type="evidence" value="ECO:0000266"/>
    <property type="project" value="RGD"/>
</dbReference>
<dbReference type="GO" id="GO:0004867">
    <property type="term" value="F:serine-type endopeptidase inhibitor activity"/>
    <property type="evidence" value="ECO:0000266"/>
    <property type="project" value="RGD"/>
</dbReference>
<dbReference type="GO" id="GO:0030546">
    <property type="term" value="F:signaling receptor activator activity"/>
    <property type="evidence" value="ECO:0000266"/>
    <property type="project" value="RGD"/>
</dbReference>
<dbReference type="GO" id="GO:0005102">
    <property type="term" value="F:signaling receptor binding"/>
    <property type="evidence" value="ECO:0000266"/>
    <property type="project" value="RGD"/>
</dbReference>
<dbReference type="GO" id="GO:0046914">
    <property type="term" value="F:transition metal ion binding"/>
    <property type="evidence" value="ECO:0007669"/>
    <property type="project" value="InterPro"/>
</dbReference>
<dbReference type="GO" id="GO:0008344">
    <property type="term" value="P:adult locomotory behavior"/>
    <property type="evidence" value="ECO:0000250"/>
    <property type="project" value="UniProtKB"/>
</dbReference>
<dbReference type="GO" id="GO:1990000">
    <property type="term" value="P:amyloid fibril formation"/>
    <property type="evidence" value="ECO:0000266"/>
    <property type="project" value="RGD"/>
</dbReference>
<dbReference type="GO" id="GO:0061844">
    <property type="term" value="P:antimicrobial humoral immune response mediated by antimicrobial peptide"/>
    <property type="evidence" value="ECO:0000266"/>
    <property type="project" value="RGD"/>
</dbReference>
<dbReference type="GO" id="GO:0048143">
    <property type="term" value="P:astrocyte activation"/>
    <property type="evidence" value="ECO:0000266"/>
    <property type="project" value="RGD"/>
</dbReference>
<dbReference type="GO" id="GO:0002265">
    <property type="term" value="P:astrocyte activation involved in immune response"/>
    <property type="evidence" value="ECO:0000266"/>
    <property type="project" value="RGD"/>
</dbReference>
<dbReference type="GO" id="GO:0008088">
    <property type="term" value="P:axo-dendritic transport"/>
    <property type="evidence" value="ECO:0000250"/>
    <property type="project" value="UniProtKB"/>
</dbReference>
<dbReference type="GO" id="GO:0016199">
    <property type="term" value="P:axon midline choice point recognition"/>
    <property type="evidence" value="ECO:0000250"/>
    <property type="project" value="UniProtKB"/>
</dbReference>
<dbReference type="GO" id="GO:0007409">
    <property type="term" value="P:axonogenesis"/>
    <property type="evidence" value="ECO:0000250"/>
    <property type="project" value="UniProtKB"/>
</dbReference>
<dbReference type="GO" id="GO:0007155">
    <property type="term" value="P:cell adhesion"/>
    <property type="evidence" value="ECO:0007669"/>
    <property type="project" value="UniProtKB-KW"/>
</dbReference>
<dbReference type="GO" id="GO:1904646">
    <property type="term" value="P:cellular response to amyloid-beta"/>
    <property type="evidence" value="ECO:0000266"/>
    <property type="project" value="RGD"/>
</dbReference>
<dbReference type="GO" id="GO:0071320">
    <property type="term" value="P:cellular response to cAMP"/>
    <property type="evidence" value="ECO:0000270"/>
    <property type="project" value="RGD"/>
</dbReference>
<dbReference type="GO" id="GO:0071280">
    <property type="term" value="P:cellular response to copper ion"/>
    <property type="evidence" value="ECO:0000270"/>
    <property type="project" value="RGD"/>
</dbReference>
<dbReference type="GO" id="GO:0071287">
    <property type="term" value="P:cellular response to manganese ion"/>
    <property type="evidence" value="ECO:0000270"/>
    <property type="project" value="RGD"/>
</dbReference>
<dbReference type="GO" id="GO:1990090">
    <property type="term" value="P:cellular response to nerve growth factor stimulus"/>
    <property type="evidence" value="ECO:0000270"/>
    <property type="project" value="RGD"/>
</dbReference>
<dbReference type="GO" id="GO:0071874">
    <property type="term" value="P:cellular response to norepinephrine stimulus"/>
    <property type="evidence" value="ECO:0000315"/>
    <property type="project" value="RGD"/>
</dbReference>
<dbReference type="GO" id="GO:0007417">
    <property type="term" value="P:central nervous system development"/>
    <property type="evidence" value="ECO:0000318"/>
    <property type="project" value="GO_Central"/>
</dbReference>
<dbReference type="GO" id="GO:0008203">
    <property type="term" value="P:cholesterol metabolic process"/>
    <property type="evidence" value="ECO:0000266"/>
    <property type="project" value="RGD"/>
</dbReference>
<dbReference type="GO" id="GO:0050890">
    <property type="term" value="P:cognition"/>
    <property type="evidence" value="ECO:0000250"/>
    <property type="project" value="UniProtKB"/>
</dbReference>
<dbReference type="GO" id="GO:0048669">
    <property type="term" value="P:collateral sprouting in absence of injury"/>
    <property type="evidence" value="ECO:0000250"/>
    <property type="project" value="UniProtKB"/>
</dbReference>
<dbReference type="GO" id="GO:0180011">
    <property type="term" value="P:cytosolic mRNA polyadenylation"/>
    <property type="evidence" value="ECO:0000266"/>
    <property type="project" value="RGD"/>
</dbReference>
<dbReference type="GO" id="GO:0016358">
    <property type="term" value="P:dendrite development"/>
    <property type="evidence" value="ECO:0000250"/>
    <property type="project" value="UniProtKB"/>
</dbReference>
<dbReference type="GO" id="GO:0006897">
    <property type="term" value="P:endocytosis"/>
    <property type="evidence" value="ECO:0000250"/>
    <property type="project" value="UniProtKB"/>
</dbReference>
<dbReference type="GO" id="GO:0030198">
    <property type="term" value="P:extracellular matrix organization"/>
    <property type="evidence" value="ECO:0000250"/>
    <property type="project" value="UniProtKB"/>
</dbReference>
<dbReference type="GO" id="GO:0030900">
    <property type="term" value="P:forebrain development"/>
    <property type="evidence" value="ECO:0000266"/>
    <property type="project" value="RGD"/>
</dbReference>
<dbReference type="GO" id="GO:0000086">
    <property type="term" value="P:G2/M transition of mitotic cell cycle"/>
    <property type="evidence" value="ECO:0000266"/>
    <property type="project" value="RGD"/>
</dbReference>
<dbReference type="GO" id="GO:0010467">
    <property type="term" value="P:gene expression"/>
    <property type="evidence" value="ECO:0000266"/>
    <property type="project" value="RGD"/>
</dbReference>
<dbReference type="GO" id="GO:0045087">
    <property type="term" value="P:innate immune response"/>
    <property type="evidence" value="ECO:0000266"/>
    <property type="project" value="RGD"/>
</dbReference>
<dbReference type="GO" id="GO:0006878">
    <property type="term" value="P:intracellular copper ion homeostasis"/>
    <property type="evidence" value="ECO:0000250"/>
    <property type="project" value="UniProtKB"/>
</dbReference>
<dbReference type="GO" id="GO:0035235">
    <property type="term" value="P:ionotropic glutamate receptor signaling pathway"/>
    <property type="evidence" value="ECO:0000250"/>
    <property type="project" value="UniProtKB"/>
</dbReference>
<dbReference type="GO" id="GO:0007612">
    <property type="term" value="P:learning"/>
    <property type="evidence" value="ECO:0000266"/>
    <property type="project" value="RGD"/>
</dbReference>
<dbReference type="GO" id="GO:0007611">
    <property type="term" value="P:learning or memory"/>
    <property type="evidence" value="ECO:0000266"/>
    <property type="project" value="RGD"/>
</dbReference>
<dbReference type="GO" id="GO:0007626">
    <property type="term" value="P:locomotory behavior"/>
    <property type="evidence" value="ECO:0000250"/>
    <property type="project" value="UniProtKB"/>
</dbReference>
<dbReference type="GO" id="GO:0007617">
    <property type="term" value="P:mating behavior"/>
    <property type="evidence" value="ECO:0000250"/>
    <property type="project" value="UniProtKB"/>
</dbReference>
<dbReference type="GO" id="GO:0014005">
    <property type="term" value="P:microglia development"/>
    <property type="evidence" value="ECO:0000266"/>
    <property type="project" value="RGD"/>
</dbReference>
<dbReference type="GO" id="GO:0001774">
    <property type="term" value="P:microglial cell activation"/>
    <property type="evidence" value="ECO:0000266"/>
    <property type="project" value="RGD"/>
</dbReference>
<dbReference type="GO" id="GO:0000278">
    <property type="term" value="P:mitotic cell cycle"/>
    <property type="evidence" value="ECO:0000266"/>
    <property type="project" value="RGD"/>
</dbReference>
<dbReference type="GO" id="GO:0098815">
    <property type="term" value="P:modulation of excitatory postsynaptic potential"/>
    <property type="evidence" value="ECO:0000266"/>
    <property type="project" value="RGD"/>
</dbReference>
<dbReference type="GO" id="GO:0008285">
    <property type="term" value="P:negative regulation of cell population proliferation"/>
    <property type="evidence" value="ECO:0000266"/>
    <property type="project" value="RGD"/>
</dbReference>
<dbReference type="GO" id="GO:0010629">
    <property type="term" value="P:negative regulation of gene expression"/>
    <property type="evidence" value="ECO:0000266"/>
    <property type="project" value="RGD"/>
</dbReference>
<dbReference type="GO" id="GO:1900272">
    <property type="term" value="P:negative regulation of long-term synaptic potentiation"/>
    <property type="evidence" value="ECO:0000266"/>
    <property type="project" value="RGD"/>
</dbReference>
<dbReference type="GO" id="GO:0045665">
    <property type="term" value="P:negative regulation of neuron differentiation"/>
    <property type="evidence" value="ECO:0000266"/>
    <property type="project" value="RGD"/>
</dbReference>
<dbReference type="GO" id="GO:1905607">
    <property type="term" value="P:negative regulation of presynapse assembly"/>
    <property type="evidence" value="ECO:0000266"/>
    <property type="project" value="RGD"/>
</dbReference>
<dbReference type="GO" id="GO:0050885">
    <property type="term" value="P:neuromuscular process controlling balance"/>
    <property type="evidence" value="ECO:0000266"/>
    <property type="project" value="RGD"/>
</dbReference>
<dbReference type="GO" id="GO:0051402">
    <property type="term" value="P:neuron apoptotic process"/>
    <property type="evidence" value="ECO:0000266"/>
    <property type="project" value="RGD"/>
</dbReference>
<dbReference type="GO" id="GO:0070050">
    <property type="term" value="P:neuron cellular homeostasis"/>
    <property type="evidence" value="ECO:0000266"/>
    <property type="project" value="RGD"/>
</dbReference>
<dbReference type="GO" id="GO:0030182">
    <property type="term" value="P:neuron differentiation"/>
    <property type="evidence" value="ECO:0000266"/>
    <property type="project" value="RGD"/>
</dbReference>
<dbReference type="GO" id="GO:0031175">
    <property type="term" value="P:neuron projection development"/>
    <property type="evidence" value="ECO:0000250"/>
    <property type="project" value="UniProtKB"/>
</dbReference>
<dbReference type="GO" id="GO:1990535">
    <property type="term" value="P:neuron projection maintenance"/>
    <property type="evidence" value="ECO:0000266"/>
    <property type="project" value="RGD"/>
</dbReference>
<dbReference type="GO" id="GO:0016322">
    <property type="term" value="P:neuron remodeling"/>
    <property type="evidence" value="ECO:0000250"/>
    <property type="project" value="UniProtKB"/>
</dbReference>
<dbReference type="GO" id="GO:0007219">
    <property type="term" value="P:Notch signaling pathway"/>
    <property type="evidence" value="ECO:0007669"/>
    <property type="project" value="UniProtKB-KW"/>
</dbReference>
<dbReference type="GO" id="GO:1905908">
    <property type="term" value="P:positive regulation of amyloid fibril formation"/>
    <property type="evidence" value="ECO:0000266"/>
    <property type="project" value="RGD"/>
</dbReference>
<dbReference type="GO" id="GO:0050850">
    <property type="term" value="P:positive regulation of calcium-mediated signaling"/>
    <property type="evidence" value="ECO:0000266"/>
    <property type="project" value="RGD"/>
</dbReference>
<dbReference type="GO" id="GO:0032722">
    <property type="term" value="P:positive regulation of chemokine production"/>
    <property type="evidence" value="ECO:0000266"/>
    <property type="project" value="RGD"/>
</dbReference>
<dbReference type="GO" id="GO:0070374">
    <property type="term" value="P:positive regulation of ERK1 and ERK2 cascade"/>
    <property type="evidence" value="ECO:0000266"/>
    <property type="project" value="RGD"/>
</dbReference>
<dbReference type="GO" id="GO:0010971">
    <property type="term" value="P:positive regulation of G2/M transition of mitotic cell cycle"/>
    <property type="evidence" value="ECO:0000266"/>
    <property type="project" value="RGD"/>
</dbReference>
<dbReference type="GO" id="GO:0010628">
    <property type="term" value="P:positive regulation of gene expression"/>
    <property type="evidence" value="ECO:0000266"/>
    <property type="project" value="RGD"/>
</dbReference>
<dbReference type="GO" id="GO:0045821">
    <property type="term" value="P:positive regulation of glycolytic process"/>
    <property type="evidence" value="ECO:0000266"/>
    <property type="project" value="RGD"/>
</dbReference>
<dbReference type="GO" id="GO:0050729">
    <property type="term" value="P:positive regulation of inflammatory response"/>
    <property type="evidence" value="ECO:0000266"/>
    <property type="project" value="RGD"/>
</dbReference>
<dbReference type="GO" id="GO:0032731">
    <property type="term" value="P:positive regulation of interleukin-1 beta production"/>
    <property type="evidence" value="ECO:0000266"/>
    <property type="project" value="RGD"/>
</dbReference>
<dbReference type="GO" id="GO:0032755">
    <property type="term" value="P:positive regulation of interleukin-6 production"/>
    <property type="evidence" value="ECO:0000266"/>
    <property type="project" value="RGD"/>
</dbReference>
<dbReference type="GO" id="GO:0046330">
    <property type="term" value="P:positive regulation of JNK cascade"/>
    <property type="evidence" value="ECO:0000266"/>
    <property type="project" value="RGD"/>
</dbReference>
<dbReference type="GO" id="GO:1900273">
    <property type="term" value="P:positive regulation of long-term synaptic potentiation"/>
    <property type="evidence" value="ECO:0000266"/>
    <property type="project" value="RGD"/>
</dbReference>
<dbReference type="GO" id="GO:0045931">
    <property type="term" value="P:positive regulation of mitotic cell cycle"/>
    <property type="evidence" value="ECO:0000250"/>
    <property type="project" value="UniProtKB"/>
</dbReference>
<dbReference type="GO" id="GO:0043525">
    <property type="term" value="P:positive regulation of neuron apoptotic process"/>
    <property type="evidence" value="ECO:0000266"/>
    <property type="project" value="RGD"/>
</dbReference>
<dbReference type="GO" id="GO:1901224">
    <property type="term" value="P:positive regulation of non-canonical NF-kappaB signal transduction"/>
    <property type="evidence" value="ECO:0000266"/>
    <property type="project" value="RGD"/>
</dbReference>
<dbReference type="GO" id="GO:0051247">
    <property type="term" value="P:positive regulation of protein metabolic process"/>
    <property type="evidence" value="ECO:0000314"/>
    <property type="project" value="ARUK-UCL"/>
</dbReference>
<dbReference type="GO" id="GO:2000406">
    <property type="term" value="P:positive regulation of T cell migration"/>
    <property type="evidence" value="ECO:0000266"/>
    <property type="project" value="RGD"/>
</dbReference>
<dbReference type="GO" id="GO:0045944">
    <property type="term" value="P:positive regulation of transcription by RNA polymerase II"/>
    <property type="evidence" value="ECO:0000266"/>
    <property type="project" value="RGD"/>
</dbReference>
<dbReference type="GO" id="GO:0032760">
    <property type="term" value="P:positive regulation of tumor necrosis factor production"/>
    <property type="evidence" value="ECO:0000266"/>
    <property type="project" value="RGD"/>
</dbReference>
<dbReference type="GO" id="GO:1900221">
    <property type="term" value="P:regulation of amyloid-beta clearance"/>
    <property type="evidence" value="ECO:0000266"/>
    <property type="project" value="RGD"/>
</dbReference>
<dbReference type="GO" id="GO:0010468">
    <property type="term" value="P:regulation of gene expression"/>
    <property type="evidence" value="ECO:0000266"/>
    <property type="project" value="RGD"/>
</dbReference>
<dbReference type="GO" id="GO:0048169">
    <property type="term" value="P:regulation of long-term neuronal synaptic plasticity"/>
    <property type="evidence" value="ECO:0000266"/>
    <property type="project" value="RGD"/>
</dbReference>
<dbReference type="GO" id="GO:0040014">
    <property type="term" value="P:regulation of multicellular organism growth"/>
    <property type="evidence" value="ECO:0000250"/>
    <property type="project" value="UniProtKB"/>
</dbReference>
<dbReference type="GO" id="GO:1905606">
    <property type="term" value="P:regulation of presynapse assembly"/>
    <property type="evidence" value="ECO:0000266"/>
    <property type="project" value="RGD"/>
</dbReference>
<dbReference type="GO" id="GO:0150003">
    <property type="term" value="P:regulation of spontaneous synaptic transmission"/>
    <property type="evidence" value="ECO:0000266"/>
    <property type="project" value="RGD"/>
</dbReference>
<dbReference type="GO" id="GO:0050803">
    <property type="term" value="P:regulation of synapse structure or activity"/>
    <property type="evidence" value="ECO:0000250"/>
    <property type="project" value="UniProtKB"/>
</dbReference>
<dbReference type="GO" id="GO:0006417">
    <property type="term" value="P:regulation of translation"/>
    <property type="evidence" value="ECO:0000250"/>
    <property type="project" value="UniProtKB"/>
</dbReference>
<dbReference type="GO" id="GO:0070555">
    <property type="term" value="P:response to interleukin-1"/>
    <property type="evidence" value="ECO:0000314"/>
    <property type="project" value="ARUK-UCL"/>
</dbReference>
<dbReference type="GO" id="GO:0010288">
    <property type="term" value="P:response to lead ion"/>
    <property type="evidence" value="ECO:0000270"/>
    <property type="project" value="RGD"/>
</dbReference>
<dbReference type="GO" id="GO:0006979">
    <property type="term" value="P:response to oxidative stress"/>
    <property type="evidence" value="ECO:0000266"/>
    <property type="project" value="RGD"/>
</dbReference>
<dbReference type="GO" id="GO:0051563">
    <property type="term" value="P:smooth endoplasmic reticulum calcium ion homeostasis"/>
    <property type="evidence" value="ECO:0000266"/>
    <property type="project" value="RGD"/>
</dbReference>
<dbReference type="GO" id="GO:0001967">
    <property type="term" value="P:suckling behavior"/>
    <property type="evidence" value="ECO:0000266"/>
    <property type="project" value="RGD"/>
</dbReference>
<dbReference type="GO" id="GO:0050808">
    <property type="term" value="P:synapse organization"/>
    <property type="evidence" value="ECO:0000266"/>
    <property type="project" value="RGD"/>
</dbReference>
<dbReference type="GO" id="GO:0051124">
    <property type="term" value="P:synaptic assembly at neuromuscular junction"/>
    <property type="evidence" value="ECO:0000266"/>
    <property type="project" value="RGD"/>
</dbReference>
<dbReference type="GO" id="GO:0008542">
    <property type="term" value="P:visual learning"/>
    <property type="evidence" value="ECO:0000250"/>
    <property type="project" value="UniProtKB"/>
</dbReference>
<dbReference type="CDD" id="cd22607">
    <property type="entry name" value="Kunitz_ABPP-like"/>
    <property type="match status" value="1"/>
</dbReference>
<dbReference type="DisProt" id="DP01887"/>
<dbReference type="FunFam" id="3.30.1490.140:FF:000001">
    <property type="entry name" value="Amyloid beta (A4) protein b"/>
    <property type="match status" value="1"/>
</dbReference>
<dbReference type="FunFam" id="3.90.570.10:FF:000001">
    <property type="entry name" value="Amyloid beta A4 protein"/>
    <property type="match status" value="1"/>
</dbReference>
<dbReference type="FunFam" id="4.10.410.10:FF:000001">
    <property type="entry name" value="Amyloid beta A4 protein"/>
    <property type="match status" value="1"/>
</dbReference>
<dbReference type="FunFam" id="1.20.120.770:FF:000001">
    <property type="entry name" value="Amyloid beta A4 protein-like isoform 1"/>
    <property type="match status" value="1"/>
</dbReference>
<dbReference type="Gene3D" id="6.10.250.1670">
    <property type="match status" value="1"/>
</dbReference>
<dbReference type="Gene3D" id="1.20.120.770">
    <property type="entry name" value="Amyloid precursor protein, E2 domain"/>
    <property type="match status" value="1"/>
</dbReference>
<dbReference type="Gene3D" id="3.30.1490.140">
    <property type="entry name" value="Amyloidogenic glycoprotein, copper-binding domain"/>
    <property type="match status" value="1"/>
</dbReference>
<dbReference type="Gene3D" id="3.90.570.10">
    <property type="entry name" value="Amyloidogenic glycoprotein, heparin-binding domain"/>
    <property type="match status" value="1"/>
</dbReference>
<dbReference type="Gene3D" id="4.10.410.10">
    <property type="entry name" value="Pancreatic trypsin inhibitor Kunitz domain"/>
    <property type="match status" value="1"/>
</dbReference>
<dbReference type="Gene3D" id="2.30.29.30">
    <property type="entry name" value="Pleckstrin-homology domain (PH domain)/Phosphotyrosine-binding domain (PTB)"/>
    <property type="match status" value="1"/>
</dbReference>
<dbReference type="InterPro" id="IPR036669">
    <property type="entry name" value="Amyloid_Cu-bd_sf"/>
</dbReference>
<dbReference type="InterPro" id="IPR008155">
    <property type="entry name" value="Amyloid_glyco"/>
</dbReference>
<dbReference type="InterPro" id="IPR013803">
    <property type="entry name" value="Amyloid_glyco_Abeta"/>
</dbReference>
<dbReference type="InterPro" id="IPR011178">
    <property type="entry name" value="Amyloid_glyco_Cu-bd"/>
</dbReference>
<dbReference type="InterPro" id="IPR024329">
    <property type="entry name" value="Amyloid_glyco_E2_domain"/>
</dbReference>
<dbReference type="InterPro" id="IPR008154">
    <property type="entry name" value="Amyloid_glyco_extra"/>
</dbReference>
<dbReference type="InterPro" id="IPR015849">
    <property type="entry name" value="Amyloid_glyco_heparin-bd"/>
</dbReference>
<dbReference type="InterPro" id="IPR036454">
    <property type="entry name" value="Amyloid_glyco_heparin-bd_sf"/>
</dbReference>
<dbReference type="InterPro" id="IPR019745">
    <property type="entry name" value="Amyloid_glyco_intracell_CS"/>
</dbReference>
<dbReference type="InterPro" id="IPR019543">
    <property type="entry name" value="APP_amyloid_C"/>
</dbReference>
<dbReference type="InterPro" id="IPR019744">
    <property type="entry name" value="APP_CUBD_CS"/>
</dbReference>
<dbReference type="InterPro" id="IPR036176">
    <property type="entry name" value="E2_sf"/>
</dbReference>
<dbReference type="InterPro" id="IPR002223">
    <property type="entry name" value="Kunitz_BPTI"/>
</dbReference>
<dbReference type="InterPro" id="IPR036880">
    <property type="entry name" value="Kunitz_BPTI_sf"/>
</dbReference>
<dbReference type="InterPro" id="IPR011993">
    <property type="entry name" value="PH-like_dom_sf"/>
</dbReference>
<dbReference type="InterPro" id="IPR020901">
    <property type="entry name" value="Prtase_inh_Kunz-CS"/>
</dbReference>
<dbReference type="PANTHER" id="PTHR23103">
    <property type="entry name" value="ALZHEIMER'S DISEASE BETA-AMYLOID RELATED"/>
    <property type="match status" value="1"/>
</dbReference>
<dbReference type="PANTHER" id="PTHR23103:SF7">
    <property type="entry name" value="AMYLOID-BETA PRECURSOR PROTEIN"/>
    <property type="match status" value="1"/>
</dbReference>
<dbReference type="Pfam" id="PF10515">
    <property type="entry name" value="APP_amyloid"/>
    <property type="match status" value="1"/>
</dbReference>
<dbReference type="Pfam" id="PF12924">
    <property type="entry name" value="APP_Cu_bd"/>
    <property type="match status" value="1"/>
</dbReference>
<dbReference type="Pfam" id="PF12925">
    <property type="entry name" value="APP_E2"/>
    <property type="match status" value="1"/>
</dbReference>
<dbReference type="Pfam" id="PF02177">
    <property type="entry name" value="APP_N"/>
    <property type="match status" value="1"/>
</dbReference>
<dbReference type="Pfam" id="PF03494">
    <property type="entry name" value="Beta-APP"/>
    <property type="match status" value="1"/>
</dbReference>
<dbReference type="Pfam" id="PF00014">
    <property type="entry name" value="Kunitz_BPTI"/>
    <property type="match status" value="1"/>
</dbReference>
<dbReference type="PRINTS" id="PR00203">
    <property type="entry name" value="AMYLOIDA4"/>
</dbReference>
<dbReference type="PRINTS" id="PR00759">
    <property type="entry name" value="BASICPTASE"/>
</dbReference>
<dbReference type="PRINTS" id="PR00204">
    <property type="entry name" value="BETAAMYLOID"/>
</dbReference>
<dbReference type="SMART" id="SM00006">
    <property type="entry name" value="A4_EXTRA"/>
    <property type="match status" value="1"/>
</dbReference>
<dbReference type="SMART" id="SM00131">
    <property type="entry name" value="KU"/>
    <property type="match status" value="1"/>
</dbReference>
<dbReference type="SUPFAM" id="SSF56491">
    <property type="entry name" value="A heparin-binding domain"/>
    <property type="match status" value="1"/>
</dbReference>
<dbReference type="SUPFAM" id="SSF89811">
    <property type="entry name" value="Amyloid beta a4 protein copper binding domain (domain 2)"/>
    <property type="match status" value="1"/>
</dbReference>
<dbReference type="SUPFAM" id="SSF57362">
    <property type="entry name" value="BPTI-like"/>
    <property type="match status" value="1"/>
</dbReference>
<dbReference type="SUPFAM" id="SSF109843">
    <property type="entry name" value="CAPPD, an extracellular domain of amyloid beta A4 protein"/>
    <property type="match status" value="1"/>
</dbReference>
<dbReference type="PROSITE" id="PS00319">
    <property type="entry name" value="APP_CUBD"/>
    <property type="match status" value="1"/>
</dbReference>
<dbReference type="PROSITE" id="PS51869">
    <property type="entry name" value="APP_E1"/>
    <property type="match status" value="1"/>
</dbReference>
<dbReference type="PROSITE" id="PS51870">
    <property type="entry name" value="APP_E2"/>
    <property type="match status" value="1"/>
</dbReference>
<dbReference type="PROSITE" id="PS00320">
    <property type="entry name" value="APP_INTRA"/>
    <property type="match status" value="1"/>
</dbReference>
<dbReference type="PROSITE" id="PS00280">
    <property type="entry name" value="BPTI_KUNITZ_1"/>
    <property type="match status" value="1"/>
</dbReference>
<dbReference type="PROSITE" id="PS50279">
    <property type="entry name" value="BPTI_KUNITZ_2"/>
    <property type="match status" value="1"/>
</dbReference>
<name>A4_RAT</name>
<feature type="signal peptide" evidence="2">
    <location>
        <begin position="1"/>
        <end position="17"/>
    </location>
</feature>
<feature type="chain" id="PRO_0000000159" description="Amyloid-beta precursor protein">
    <location>
        <begin position="18"/>
        <end position="770"/>
    </location>
</feature>
<feature type="chain" id="PRO_0000000160" description="Soluble APP-alpha" evidence="1">
    <location>
        <begin position="18"/>
        <end position="687"/>
    </location>
</feature>
<feature type="chain" id="PRO_0000000161" description="Soluble APP-beta" evidence="4">
    <location>
        <begin position="18"/>
        <end position="671"/>
    </location>
</feature>
<feature type="chain" id="PRO_0000381971" description="N-APP" evidence="1">
    <location>
        <begin position="18"/>
        <end position="286"/>
    </location>
</feature>
<feature type="chain" id="PRO_0000000162" description="C99" evidence="4">
    <location>
        <begin position="672"/>
        <end position="770"/>
    </location>
</feature>
<feature type="chain" id="PRO_0000000163" description="Amyloid-beta protein 42" evidence="2">
    <location>
        <begin position="672"/>
        <end position="713"/>
    </location>
</feature>
<feature type="chain" id="PRO_0000000164" description="Amyloid-beta protein 40" evidence="2">
    <location>
        <begin position="672"/>
        <end position="711"/>
    </location>
</feature>
<feature type="chain" id="PRO_0000000165" description="C83" evidence="1">
    <location>
        <begin position="688"/>
        <end position="770"/>
    </location>
</feature>
<feature type="peptide" id="PRO_0000000166" description="P3(42)" evidence="1">
    <location>
        <begin position="688"/>
        <end position="713"/>
    </location>
</feature>
<feature type="peptide" id="PRO_0000000167" description="P3(40)" evidence="1">
    <location>
        <begin position="688"/>
        <end position="711"/>
    </location>
</feature>
<feature type="chain" id="PRO_0000384579" description="C80">
    <location>
        <begin position="691"/>
        <end position="770"/>
    </location>
</feature>
<feature type="chain" id="PRO_0000000168" description="Gamma-secretase C-terminal fragment 59">
    <location>
        <begin position="712"/>
        <end position="770"/>
    </location>
</feature>
<feature type="chain" id="PRO_0000000169" description="Gamma-secretase C-terminal fragment 57">
    <location>
        <begin position="714"/>
        <end position="770"/>
    </location>
</feature>
<feature type="chain" id="PRO_0000000170" description="Gamma-secretase C-terminal fragment 50">
    <location>
        <begin position="721"/>
        <end position="770"/>
    </location>
</feature>
<feature type="chain" id="PRO_0000000171" description="C31" evidence="1">
    <location>
        <begin position="740"/>
        <end position="770"/>
    </location>
</feature>
<feature type="topological domain" description="Extracellular" evidence="25">
    <location>
        <begin position="18"/>
        <end position="701"/>
    </location>
</feature>
<feature type="transmembrane region" description="Helical" evidence="2">
    <location>
        <begin position="702"/>
        <end position="722"/>
    </location>
</feature>
<feature type="topological domain" description="Cytoplasmic" evidence="25">
    <location>
        <begin position="723"/>
        <end position="770"/>
    </location>
</feature>
<feature type="domain" description="E1" evidence="6">
    <location>
        <begin position="28"/>
        <end position="189"/>
    </location>
</feature>
<feature type="domain" description="BPTI/Kunitz inhibitor" evidence="5">
    <location>
        <begin position="291"/>
        <end position="341"/>
    </location>
</feature>
<feature type="domain" description="E2" evidence="7">
    <location>
        <begin position="374"/>
        <end position="565"/>
    </location>
</feature>
<feature type="region of interest" description="GFLD subdomain" evidence="6">
    <location>
        <begin position="28"/>
        <end position="123"/>
    </location>
</feature>
<feature type="region of interest" description="CuBD subdomain" evidence="6">
    <location>
        <begin position="131"/>
        <end position="189"/>
    </location>
</feature>
<feature type="region of interest" description="Copper-binding" evidence="1">
    <location>
        <begin position="135"/>
        <end position="155"/>
    </location>
</feature>
<feature type="region of interest" description="Zinc-binding" evidence="1">
    <location>
        <begin position="181"/>
        <end position="188"/>
    </location>
</feature>
<feature type="region of interest" description="Disordered" evidence="8">
    <location>
        <begin position="196"/>
        <end position="283"/>
    </location>
</feature>
<feature type="region of interest" description="Heparin-binding" evidence="1">
    <location>
        <begin position="391"/>
        <end position="423"/>
    </location>
</feature>
<feature type="region of interest" description="Heparin-binding" evidence="1">
    <location>
        <begin position="491"/>
        <end position="522"/>
    </location>
</feature>
<feature type="region of interest" description="Collagen-binding" evidence="2">
    <location>
        <begin position="523"/>
        <end position="540"/>
    </location>
</feature>
<feature type="region of interest" description="Interaction with PSEN1" evidence="2">
    <location>
        <begin position="695"/>
        <end position="722"/>
    </location>
</feature>
<feature type="region of interest" description="Interaction with G(o)-alpha">
    <location>
        <begin position="732"/>
        <end position="751"/>
    </location>
</feature>
<feature type="region of interest" description="Required for the interaction with KIF5B and for anterograde transport in axons" evidence="2">
    <location>
        <begin position="756"/>
        <end position="770"/>
    </location>
</feature>
<feature type="short sequence motif" description="OX-2" evidence="2">
    <location>
        <begin position="344"/>
        <end position="365"/>
    </location>
</feature>
<feature type="short sequence motif" description="Basolateral sorting signal" evidence="1">
    <location>
        <begin position="724"/>
        <end position="734"/>
    </location>
</feature>
<feature type="short sequence motif" description="YENPXY motif; contains endocytosis signal" evidence="2">
    <location>
        <begin position="757"/>
        <end position="762"/>
    </location>
</feature>
<feature type="compositionally biased region" description="Acidic residues" evidence="8">
    <location>
        <begin position="196"/>
        <end position="207"/>
    </location>
</feature>
<feature type="compositionally biased region" description="Acidic residues" evidence="8">
    <location>
        <begin position="228"/>
        <end position="264"/>
    </location>
</feature>
<feature type="compositionally biased region" description="Low complexity" evidence="8">
    <location>
        <begin position="268"/>
        <end position="281"/>
    </location>
</feature>
<feature type="binding site" evidence="2">
    <location>
        <begin position="96"/>
        <end position="110"/>
    </location>
    <ligand>
        <name>heparin</name>
        <dbReference type="ChEBI" id="CHEBI:28304"/>
    </ligand>
</feature>
<feature type="binding site" evidence="6">
    <location>
        <position position="147"/>
    </location>
    <ligand>
        <name>Cu(2+)</name>
        <dbReference type="ChEBI" id="CHEBI:29036"/>
        <label>1</label>
    </ligand>
</feature>
<feature type="binding site" evidence="6">
    <location>
        <position position="151"/>
    </location>
    <ligand>
        <name>Cu(2+)</name>
        <dbReference type="ChEBI" id="CHEBI:29036"/>
        <label>1</label>
    </ligand>
</feature>
<feature type="binding site" evidence="6">
    <location>
        <position position="168"/>
    </location>
    <ligand>
        <name>Cu(2+)</name>
        <dbReference type="ChEBI" id="CHEBI:29036"/>
        <label>1</label>
    </ligand>
</feature>
<feature type="binding site" evidence="2">
    <location>
        <position position="183"/>
    </location>
    <ligand>
        <name>Zn(2+)</name>
        <dbReference type="ChEBI" id="CHEBI:29105"/>
        <label>1</label>
    </ligand>
</feature>
<feature type="binding site" evidence="2">
    <location>
        <position position="186"/>
    </location>
    <ligand>
        <name>Zn(2+)</name>
        <dbReference type="ChEBI" id="CHEBI:29105"/>
        <label>1</label>
    </ligand>
</feature>
<feature type="binding site" evidence="2">
    <location>
        <position position="187"/>
    </location>
    <ligand>
        <name>Zn(2+)</name>
        <dbReference type="ChEBI" id="CHEBI:29105"/>
        <label>1</label>
    </ligand>
</feature>
<feature type="binding site" evidence="2">
    <location>
        <position position="677"/>
    </location>
    <ligand>
        <name>Cu(2+)</name>
        <dbReference type="ChEBI" id="CHEBI:29036"/>
        <label>2</label>
    </ligand>
</feature>
<feature type="binding site" evidence="2">
    <location>
        <position position="677"/>
    </location>
    <ligand>
        <name>Zn(2+)</name>
        <dbReference type="ChEBI" id="CHEBI:29105"/>
        <label>2</label>
    </ligand>
</feature>
<feature type="binding site" evidence="2">
    <location>
        <position position="685"/>
    </location>
    <ligand>
        <name>Cu(2+)</name>
        <dbReference type="ChEBI" id="CHEBI:29036"/>
        <label>2</label>
    </ligand>
</feature>
<feature type="binding site" evidence="2">
    <location>
        <position position="685"/>
    </location>
    <ligand>
        <name>Zn(2+)</name>
        <dbReference type="ChEBI" id="CHEBI:29105"/>
        <label>2</label>
    </ligand>
</feature>
<feature type="site" description="Required for Cu(2+) reduction" evidence="6">
    <location>
        <position position="170"/>
    </location>
</feature>
<feature type="site" description="Cleavage; by caspases" evidence="2">
    <location>
        <begin position="197"/>
        <end position="198"/>
    </location>
</feature>
<feature type="site" description="Cleavage; by caspases" evidence="2">
    <location>
        <begin position="219"/>
        <end position="220"/>
    </location>
</feature>
<feature type="site" description="Reactive bond" evidence="1">
    <location>
        <begin position="301"/>
        <end position="302"/>
    </location>
</feature>
<feature type="site" description="Cleavage; by beta-secretase" evidence="2">
    <location>
        <begin position="671"/>
        <end position="672"/>
    </location>
</feature>
<feature type="site" description="Cleavage; by ACE" evidence="2">
    <location>
        <begin position="678"/>
        <end position="679"/>
    </location>
</feature>
<feature type="site" description="Cleavage; by alpha-secretase" evidence="18">
    <location>
        <begin position="687"/>
        <end position="688"/>
    </location>
</feature>
<feature type="site" description="Cleavage; by theta-secretase" evidence="18">
    <location>
        <begin position="690"/>
        <end position="691"/>
    </location>
</feature>
<feature type="site" description="Susceptible to oxidation" evidence="2">
    <location>
        <position position="706"/>
    </location>
</feature>
<feature type="site" description="Cleavage; by gamma-secretase; site 1" evidence="18">
    <location>
        <begin position="711"/>
        <end position="712"/>
    </location>
</feature>
<feature type="site" description="Cleavage; by gamma-secretase; site 2" evidence="2">
    <location>
        <begin position="713"/>
        <end position="714"/>
    </location>
</feature>
<feature type="site" description="Cleavage; by gamma-secretase; site 3" evidence="2">
    <location>
        <begin position="720"/>
        <end position="721"/>
    </location>
</feature>
<feature type="site" description="Cleavage; by a caspase" evidence="2">
    <location>
        <begin position="739"/>
        <end position="740"/>
    </location>
</feature>
<feature type="modified residue" description="Phosphoserine; by CK2" evidence="2">
    <location>
        <position position="198"/>
    </location>
</feature>
<feature type="modified residue" description="Phosphoserine; by CK1" evidence="2">
    <location>
        <position position="206"/>
    </location>
</feature>
<feature type="modified residue" description="Sulfotyrosine" evidence="4">
    <location>
        <position position="217"/>
    </location>
</feature>
<feature type="modified residue" description="Sulfotyrosine" evidence="4">
    <location>
        <position position="262"/>
    </location>
</feature>
<feature type="modified residue" description="Sulfotyrosine" evidence="4">
    <location>
        <position position="336"/>
    </location>
</feature>
<feature type="modified residue" description="Phosphoserine" evidence="27">
    <location>
        <position position="441"/>
    </location>
</feature>
<feature type="modified residue" description="Phosphotyrosine" evidence="2">
    <location>
        <position position="497"/>
    </location>
</feature>
<feature type="modified residue" description="Phosphothreonine" evidence="22">
    <location>
        <position position="729"/>
    </location>
</feature>
<feature type="modified residue" description="Phosphoserine; by APP-kinase I" evidence="10 22">
    <location>
        <position position="730"/>
    </location>
</feature>
<feature type="modified residue" description="Phosphothreonine; by CDK5 and MAPK10" evidence="12 22">
    <location>
        <position position="743"/>
    </location>
</feature>
<feature type="modified residue" description="Phosphotyrosine; by ABL1" evidence="3">
    <location>
        <position position="757"/>
    </location>
</feature>
<feature type="glycosylation site" description="N-linked (GlcNAc...) asparagine" evidence="4">
    <location>
        <position position="542"/>
    </location>
</feature>
<feature type="glycosylation site" description="N-linked (GlcNAc...) asparagine" evidence="4">
    <location>
        <position position="571"/>
    </location>
</feature>
<feature type="glycosylation site" description="O-linked (Xyl...) (chondroitin sulfate) serine; in L-APP isoforms">
    <location>
        <position position="656"/>
    </location>
</feature>
<feature type="disulfide bond" evidence="6">
    <location>
        <begin position="38"/>
        <end position="62"/>
    </location>
</feature>
<feature type="disulfide bond" evidence="6">
    <location>
        <begin position="73"/>
        <end position="117"/>
    </location>
</feature>
<feature type="disulfide bond" evidence="6">
    <location>
        <begin position="98"/>
        <end position="105"/>
    </location>
</feature>
<feature type="disulfide bond" evidence="6">
    <location>
        <begin position="133"/>
        <end position="187"/>
    </location>
</feature>
<feature type="disulfide bond" evidence="6">
    <location>
        <begin position="144"/>
        <end position="174"/>
    </location>
</feature>
<feature type="disulfide bond" evidence="6">
    <location>
        <begin position="158"/>
        <end position="186"/>
    </location>
</feature>
<feature type="disulfide bond" evidence="5">
    <location>
        <begin position="291"/>
        <end position="341"/>
    </location>
</feature>
<feature type="disulfide bond" evidence="5">
    <location>
        <begin position="300"/>
        <end position="324"/>
    </location>
</feature>
<feature type="disulfide bond" evidence="5">
    <location>
        <begin position="316"/>
        <end position="337"/>
    </location>
</feature>
<feature type="cross-link" description="Glycyl lysine isopeptide (Lys-Gly) (interchain with G-Cter in ubiquitin)" evidence="16">
    <location>
        <position position="763"/>
    </location>
</feature>
<feature type="splice variant" id="VSP_000015" description="In isoform APP695." evidence="24">
    <original>E</original>
    <variation>V</variation>
    <location>
        <position position="289"/>
    </location>
</feature>
<feature type="splice variant" id="VSP_000016" description="In isoform APP695." evidence="24">
    <location>
        <begin position="290"/>
        <end position="364"/>
    </location>
</feature>
<feature type="mutagenesis site" description="No chondroitin sulfate linkage to isoform L-APP733." evidence="19">
    <original>S</original>
    <variation>A</variation>
    <location>
        <position position="656"/>
    </location>
</feature>
<feature type="mutagenesis site" description="Little oxidized neuronal proteins. Scarce amyloid-beta protein 42 aggregation. No neurotoxicity." evidence="15">
    <original>G</original>
    <variation>V</variation>
    <location>
        <position position="704"/>
    </location>
</feature>
<feature type="mutagenesis site" description="Almost complete loss of binding to GNAO1. No inhibition of GTPase activity." evidence="9">
    <original>HH</original>
    <variation>GL</variation>
    <variation>GP</variation>
    <location>
        <begin position="732"/>
        <end position="733"/>
    </location>
</feature>
<feature type="mutagenesis site" description="No effect on neurite growth and maturation." evidence="11">
    <original>T</original>
    <variation>A</variation>
    <location>
        <position position="743"/>
    </location>
</feature>
<feature type="mutagenesis site" description="Inhibits neurite growth and maturation." evidence="11">
    <original>T</original>
    <variation>E</variation>
    <location>
        <position position="743"/>
    </location>
</feature>
<feature type="mutagenesis site" description="No DBB1 binding." evidence="23">
    <original>Y</original>
    <variation>G</variation>
    <location>
        <position position="757"/>
    </location>
</feature>
<feature type="mutagenesis site" description="Some DBB1 binding." evidence="23">
    <original>N</original>
    <variation>A</variation>
    <location>
        <position position="759"/>
    </location>
</feature>
<feature type="mutagenesis site" description="Some DBB1 binding." evidence="23">
    <original>Y</original>
    <variation>A</variation>
    <location>
        <position position="762"/>
    </location>
</feature>
<feature type="mutagenesis site" description="Loss of ubiquitination." evidence="16">
    <original>K</original>
    <variation>R</variation>
    <location>
        <position position="763"/>
    </location>
</feature>
<feature type="turn" evidence="29">
    <location>
        <begin position="674"/>
        <end position="676"/>
    </location>
</feature>
<feature type="turn" evidence="28">
    <location>
        <begin position="679"/>
        <end position="686"/>
    </location>
</feature>
<feature type="helix" evidence="28">
    <location>
        <begin position="687"/>
        <end position="695"/>
    </location>
</feature>
<comment type="function">
    <text evidence="1 2">Functions as a cell surface receptor and performs physiological functions on the surface of neurons relevant to neurite growth, neuronal adhesion and axonogenesis. Interaction between APP molecules on neighboring cells promotes synaptogenesis. Involved in cell mobility and transcription regulation through protein-protein interactions (By similarity). Can promote transcription activation through binding to APBB1-KAT5 and inhibit Notch signaling through interaction with Numb (By similarity). Couples to apoptosis-inducing pathways such as those mediated by G(o) and JIP. Inhibits G(o)-alpha ATPase activity. Acts as a kinesin I membrane receptor, mediating the axonal transport of beta-secretase and presenilin 1 (By similarity). By acting as a kinesin I membrane receptor, plays a role in axonal anterograde transport of cargo towards synapses in axons (By similarity). May be involved in copper homeostasis/oxidative stress through copper ion reduction. Can regulate neurite outgrowth through binding to components of the extracellular matrix such as heparin and collagen I and IV (By similarity). The splice isoforms that contain the BPTI domain possess protease inhibitor activity. Induces a AGER-dependent pathway that involves activation of p38 MAPK, resulting in internalization of amyloid-beta peptide and leading to mitochondrial dysfunction in cultured mitochondrial dysfunction in cultured cortical neurons. Provides Cu(2+) ions for GPC1 which are required for release of nitric oxide (NO) and subsequent degradation of the heparan sulfate chains on GPC1 (By similarity).</text>
</comment>
<comment type="function">
    <text evidence="1">Amyloid-beta peptides are lipophilic metal chelators with metal-reducing activity. Binds transient metals such as copper, zinc and iron. Rat and mouse amyloid-beta peptides bind only weakly transient metals and have little reducing activity due to substitutions of transient metal chelating residues. Amyloid-beta protein 42 may activate mononuclear phagocytes in the brain and elicits inflammatory responses. Promotes both tau aggregation and TPK II-mediated phosphorylation. Also binds GPC1 in lipid rafts (By similarity).</text>
</comment>
<comment type="function">
    <text>Appicans elicit adhesion of neural cells to the extracellular matrix and may regulate neurite outgrowth in the brain.</text>
</comment>
<comment type="function">
    <text evidence="1">The gamma-CTF peptides as well as the caspase-cleaved peptides, including C31, are potent enhancers of neuronal apoptosis.</text>
</comment>
<comment type="subunit">
    <text evidence="1 2 3 17">Binds, via its C-terminus, to the PID domain of several cytoplasmic proteins, including APBB family members, the APBA family, MAPK8IP1, SHC1 and NUMB and DAB1 (By similarity). Binding to DAB1 inhibits its serine phosphorylation (By similarity). Interacts (via NPXY motif) with DAB2 (via PID domain); the interaction is impaired by tyrosine phosphorylation of the NPXY motif. Also interacts with GPCR-like protein BPP, APPBP1, IB1, KNS2 (via its TPR domains), APPBP2 (via BaSS) and DDB1. In vitro, it binds MAPT via the MT-binding domains (By similarity). Associates with microtubules in the presence of ATP and in a kinesin-dependent manner (By similarity). Interacts, through a C-terminal domain, with GNAO1. Amyloid-beta protein 42 binds CHRNA7 in hippocampal neurons (By similarity). Amyloid-beta associates with HADH2 (By similarity). Interacts with CPEB1, ANKS1B and AGER (By similarity). Interacts with ITM2B. Interacts with ITM2C. Interacts with IDE. Can form homodimers; dimerization is enhanced in the presence of Cu(2+) ions. Can form homodimers; this is promoted by heparin binding (By similarity). Amyloid-beta protein 40 interacts with S100A9 (By similarity). CTF-alpha product of APP interacts with GSAP (By similarity). Isoform APP695 interacts with SORL1 (via N-terminal ectodomain); this interaction retains APP in the trans-Golgi network and reduces processing into soluble APP-alpha and amyloid-beta peptides (By similarity). The C99 fragment also interacts with SORL1 (By similarity). Isoform APP751 interacts with SORL1 (By similarity). Isoform APP770 interacts with SORL1 (By similarity). Interacts with PLD3 (By similarity). Interacts with VDAC1 (By similarity). Interacts with NSG1; could regulate APP processing (By similarity). Amyloid-beta protein 42 interacts with FPR2 (By similarity). Interacts with SYT7 (By similarity). Interacts (via transmembrane region) with PSEN1; the interaction is direct (By similarity). Interacts with LRRK2 (By similarity). Interacts (via cytoplasmic domain) with KIF5B (PubMed:23011729). Interacts (via C-terminus) with APBB2/FE65L1 (via C-terminus) (By similarity). Interacts (via intracellular domain) with APBB3 (By similarity).</text>
</comment>
<comment type="subcellular location">
    <subcellularLocation>
        <location evidence="2">Cell membrane</location>
        <topology evidence="2">Single-pass type I membrane protein</topology>
    </subcellularLocation>
    <subcellularLocation>
        <location evidence="2">Membrane</location>
        <topology evidence="2">Single-pass type I membrane protein</topology>
    </subcellularLocation>
    <subcellularLocation>
        <location evidence="11">Perikaryon</location>
    </subcellularLocation>
    <subcellularLocation>
        <location evidence="11">Cell projection</location>
        <location evidence="11">Growth cone</location>
    </subcellularLocation>
    <subcellularLocation>
        <location evidence="2">Membrane</location>
        <location evidence="2">Clathrin-coated pit</location>
    </subcellularLocation>
    <subcellularLocation>
        <location evidence="2">Early endosome</location>
    </subcellularLocation>
    <subcellularLocation>
        <location evidence="2">Cytoplasmic vesicle</location>
    </subcellularLocation>
    <text evidence="2 11">Cell surface protein that rapidly becomes internalized via clathrin-coated pits. Only a minor proportion is present at the cell membrane; most of the protein is present in intracellular vesicles. During maturation, the immature APP (N-glycosylated in the endoplasmic reticulum) moves to the Golgi complex where complete maturation occurs (O-glycosylated and sulfated). After alpha-secretase cleavage, soluble APP is released into the extracellular space and the C-terminal is internalized to endosomes and lysosomes. Some APP accumulates in secretory transport vesicles leaving the late Golgi compartment and returns to the cell surface. APP sorts to the basolateral surface in epithelial cells (By similarity). During neuronal differentiation, the Thr-742 phosphorylated form is located mainly in growth cones, moderately in neurites and sparingly in the cell body (PubMed:10341243). Casein kinase phosphorylation can occur either at the cell surface or within a post-Golgi compartment. Associates with GPC1 in perinuclear compartments. Colocalizes with SORL1 in a vesicular pattern in cytoplasm and perinuclear regions (By similarity).</text>
</comment>
<comment type="subcellular location">
    <molecule>C83</molecule>
    <subcellularLocation>
        <location evidence="2">Endoplasmic reticulum</location>
    </subcellularLocation>
    <subcellularLocation>
        <location evidence="2">Golgi apparatus</location>
    </subcellularLocation>
    <subcellularLocation>
        <location evidence="2">Early endosome</location>
    </subcellularLocation>
</comment>
<comment type="subcellular location">
    <molecule>C99</molecule>
    <subcellularLocation>
        <location evidence="2">Early endosome</location>
    </subcellularLocation>
</comment>
<comment type="subcellular location">
    <molecule>Amyloid-beta protein 42</molecule>
    <subcellularLocation>
        <location>Cell surface</location>
    </subcellularLocation>
    <text evidence="2">Associates with FPR2 at the cell surface and the complex is then rapidly internalized.</text>
</comment>
<comment type="subcellular location">
    <molecule>Gamma-secretase C-terminal fragment 59</molecule>
    <subcellularLocation>
        <location>Nucleus</location>
    </subcellularLocation>
    <subcellularLocation>
        <location>Cytoplasm</location>
    </subcellularLocation>
    <text evidence="2 3">Located to both the cytoplasm and nuclei of neurons. It can be translocated to the nucleus through association with APBB1 (Fe65) (By similarity). In dopaminergic neurons, the phosphorylated Thr-743 form is localized to the nucleus (By similarity).</text>
</comment>
<comment type="subcellular location">
    <molecule>Soluble APP-beta</molecule>
    <subcellularLocation>
        <location evidence="2">Secreted</location>
    </subcellularLocation>
</comment>
<comment type="alternative products">
    <event type="alternative splicing"/>
    <isoform>
        <id>P08592-1</id>
        <name>APP770</name>
        <sequence type="displayed"/>
    </isoform>
    <isoform>
        <id>P08592-2</id>
        <name>APP695</name>
        <sequence type="described" ref="VSP_000015 VSP_000016"/>
    </isoform>
    <isoform>
        <id>P08592-3</id>
        <name>L-APP677</name>
        <sequence type="not described"/>
    </isoform>
    <isoform>
        <id>P08592-4</id>
        <name>L-APP696</name>
        <sequence type="not described"/>
    </isoform>
    <isoform>
        <id>P08592-5</id>
        <name>APP714</name>
        <sequence type="not described"/>
    </isoform>
    <isoform>
        <id>P08592-6</id>
        <name>L-APP733</name>
        <sequence type="not described"/>
    </isoform>
    <isoform>
        <id>P08592-7</id>
        <name>APP751</name>
        <sequence type="not described"/>
    </isoform>
    <isoform>
        <id>P08592-8</id>
        <name>L-APP752</name>
        <sequence type="not described"/>
    </isoform>
</comment>
<comment type="tissue specificity">
    <text evidence="17 20 21">Expressed in the brain (PubMed:23011729). In the brain, non-L-APP isoforms are expressed in neurons, isoform APP695 being the predominant form. In astrocytes and microglial cells, almost 50% is L-isoform (appican).</text>
</comment>
<comment type="developmental stage">
    <text>From 6 days to 7 months, levels of KPI-containing isoforms increase in the brain cortex and hippocampus. Levels of L-APP increase in all brain regions during the same period, but levels are low compared to non-L-APP isoforms.</text>
</comment>
<comment type="induction">
    <text evidence="11">Phosphorylation of mature, glycosylated APP occurs 48-72 hours after treatment of neuronal cells with nerve growth factor which correlates with the timing of neurite outgrowth.</text>
</comment>
<comment type="domain">
    <text evidence="2">The transmembrane helix undergoes a conformation change and unravels partially when bound to PSEN1, facilitating cleavage by PSEN1.</text>
</comment>
<comment type="domain">
    <text evidence="2">The basolateral sorting signal (BaSS) is required for sorting of membrane proteins to the basolateral surface of epithelial cells.</text>
</comment>
<comment type="domain">
    <text evidence="2">The GFLD subdomain binds Cu(2+) ions; this promotes homodimerization.</text>
</comment>
<comment type="domain">
    <text evidence="2">The NPXY sequence motif found in many tyrosine-phosphorylated proteins is required for the specific binding of the PID domain. However, additional amino acids either N- or C-terminal to the NPXY motif are often required for complete interaction. The PID domain-containing proteins which bind APP require the YENPTY motif for full interaction. These interactions are independent of phosphorylation on the terminal tyrosine residue. The YENPXY site is also involved in clathrin-mediated endocytosis.</text>
</comment>
<comment type="domain">
    <text evidence="2">The C-terminal region can bind zinc ions; this favors dimerization and formation of higher oligomers.</text>
</comment>
<comment type="domain">
    <text evidence="2">The OX-2 motif shows some similarity to a region in the N-terminus of CD200/MOX2.</text>
</comment>
<comment type="PTM">
    <text evidence="2">Proteolytically processed under normal cellular conditions. Cleavage either by alpha-secretase, beta-secretase or theta-secretase leads to generation and extracellular release of soluble APP peptides, S-APP-alpha and S-APP-beta, and the retention of corresponding membrane-anchored C-terminal fragments, C80, C83 and C99. Subsequent processing of C80 and C83 by gamma-secretase yields P3 peptides. This is the major secretory pathway and is non-amyloidogenic. Alternatively, presenilin/nicastrin-mediated gamma-secretase processing of C99 releases the amyloid-beta proteins, amyloid-beta protein 40 and amyloid-beta protein 42, major components of amyloid plaques, and the cytotoxic C-terminal fragments, gamma-CTF(50), gamma-CTF(57) and gamma-CTF(59). PSEN1 cleavage is more efficient with C83 than with C99 as substrate (in vitro). Amyloid-beta protein 40 and Amyloid-beta protein 42 are cleaved by ACE. Many other minor amyloid-beta peptides, amyloid-beta 1-X peptides, are found in cerebral spinal fluid (CSF) including the amyloid-beta X-15 peptides, produced from the cleavage by alpha-secretase.</text>
</comment>
<comment type="PTM">
    <text evidence="1">Proteolytically cleaved by caspases during neuronal apoptosis. Cleavage at Asp-739 by either caspase-3, -8 or -9 results in the production of the neurotoxic C31 peptide and the increased production of amyloid-beta peptides.</text>
</comment>
<comment type="PTM">
    <text evidence="2">N-glycosylated.</text>
</comment>
<comment type="PTM">
    <text evidence="13">O-glycosylated. O-linkage of chondroitin sulfate to the L-APP isoforms produces the APP proteoglycan core proteins, the appicans. The chondroitin sulfate chain of appicans contains 4-O-sulfated galactose in the linkage region and chondroitin sulfate E in the repeated disaccharide region.</text>
</comment>
<comment type="PTM">
    <text evidence="2 10 11 12 22">Phosphorylation in the C-terminal on tyrosine, threonine and serine residues is neuron-specific (PubMed:10329382, PubMed:10341243, PubMed:9085254). Phosphorylation can affect APP processing, neuronal differentiation and interaction with other proteins (PubMed:10341243). Phosphorylated on Thr-743 in neuronal cells by Cdc5 kinase and Mapk10, in dividing cells by Cdc2 kinase in a cell-cycle dependent manner with maximal levels at the G2/M phase and, in vitro, by GSK-3-beta (PubMed:10936190). The Thr-743 phosphorylated form causes a conformational change which reduces binding of Fe65 family members (By similarity). In dopaminergic (DA) neurons, phosphorylation on Thr-743 by LRKK2 promotes the production and the nuclear translocation of the APP intracellular domain (AICD) which induces DA neuron apoptosis (By similarity). Phosphorylation on Tyr-757 is required for SHC binding. Phosphorylated in the extracellular domain by casein kinases on both soluble and membrane-bound APP (By similarity). This phosphorylation is inhibited by heparin (By similarity).</text>
</comment>
<comment type="PTM">
    <text evidence="1">Extracellular binding and reduction of copper, results in a corresponding oxidation of Cys-144 and Cys-158, and the formation of a disulfide bond.</text>
</comment>
<comment type="PTM">
    <text evidence="1">Trophic-factor deprivation triggers the cleavage of surface APP by beta-secretase to release sAPP-beta which is further cleaved to release an N-terminal fragment of APP (N-APP).</text>
</comment>
<comment type="PTM">
    <text evidence="3">Amyloid-beta peptides are degraded by IDE.</text>
</comment>
<comment type="PTM">
    <text evidence="2">Sulfated on tyrosine residues.</text>
</comment>
<comment type="mass spectrometry" mass="5911.3" method="MALDI" evidence="14">
    <molecule>Gamma-secretase C-terminal fragment 50</molecule>
</comment>
<comment type="miscellaneous">
    <text evidence="2 25">Chelation of metal ions, notably copper, iron and zinc, can induce histidine-bridging between amyloid-beta molecules resulting in amyloid-beta-metal aggregates. Rat and mouse amyloid-beta peptides have an arginine residue substituted for the bridging histidine residue and are thus less capable of forming amyloid aggregates. Extracellular zinc-binding increases binding of heparin to APP and inhibits collagen-binding (By similarity).</text>
</comment>
<comment type="miscellaneous">
    <molecule>Isoform L-APP677</molecule>
    <text evidence="25">L-isoforms are referred to as appicans.</text>
</comment>
<comment type="miscellaneous">
    <molecule>Isoform L-APP696</molecule>
    <text evidence="25">L-isoforms are referred to as appicans.</text>
</comment>
<comment type="miscellaneous">
    <molecule>Isoform L-APP733</molecule>
    <text evidence="25">L-isoforms are referred to as appicans.</text>
</comment>
<comment type="miscellaneous">
    <molecule>Isoform L-APP752</molecule>
    <text evidence="25">L-isoforms are referred to as appicans.</text>
</comment>
<comment type="similarity">
    <text evidence="6">Belongs to the APP family.</text>
</comment>